<name>AIFM1_HUMAN</name>
<evidence type="ECO:0000250" key="1"/>
<evidence type="ECO:0000250" key="2">
    <source>
        <dbReference type="UniProtKB" id="Q9Z0X1"/>
    </source>
</evidence>
<evidence type="ECO:0000255" key="3"/>
<evidence type="ECO:0000256" key="4">
    <source>
        <dbReference type="SAM" id="MobiDB-lite"/>
    </source>
</evidence>
<evidence type="ECO:0000269" key="5">
    <source>
    </source>
</evidence>
<evidence type="ECO:0000269" key="6">
    <source>
    </source>
</evidence>
<evidence type="ECO:0000269" key="7">
    <source>
    </source>
</evidence>
<evidence type="ECO:0000269" key="8">
    <source>
    </source>
</evidence>
<evidence type="ECO:0000269" key="9">
    <source>
    </source>
</evidence>
<evidence type="ECO:0000269" key="10">
    <source>
    </source>
</evidence>
<evidence type="ECO:0000269" key="11">
    <source>
    </source>
</evidence>
<evidence type="ECO:0000269" key="12">
    <source>
    </source>
</evidence>
<evidence type="ECO:0000269" key="13">
    <source>
    </source>
</evidence>
<evidence type="ECO:0000269" key="14">
    <source>
    </source>
</evidence>
<evidence type="ECO:0000269" key="15">
    <source>
    </source>
</evidence>
<evidence type="ECO:0000269" key="16">
    <source>
    </source>
</evidence>
<evidence type="ECO:0000269" key="17">
    <source>
    </source>
</evidence>
<evidence type="ECO:0000269" key="18">
    <source>
    </source>
</evidence>
<evidence type="ECO:0000269" key="19">
    <source>
    </source>
</evidence>
<evidence type="ECO:0000269" key="20">
    <source>
    </source>
</evidence>
<evidence type="ECO:0000269" key="21">
    <source>
    </source>
</evidence>
<evidence type="ECO:0000269" key="22">
    <source>
    </source>
</evidence>
<evidence type="ECO:0000269" key="23">
    <source>
    </source>
</evidence>
<evidence type="ECO:0000269" key="24">
    <source>
    </source>
</evidence>
<evidence type="ECO:0000269" key="25">
    <source>
    </source>
</evidence>
<evidence type="ECO:0000269" key="26">
    <source>
    </source>
</evidence>
<evidence type="ECO:0000269" key="27">
    <source>
    </source>
</evidence>
<evidence type="ECO:0000303" key="28">
    <source>
    </source>
</evidence>
<evidence type="ECO:0000303" key="29">
    <source>
    </source>
</evidence>
<evidence type="ECO:0000303" key="30">
    <source>
    </source>
</evidence>
<evidence type="ECO:0000303" key="31">
    <source>
    </source>
</evidence>
<evidence type="ECO:0000303" key="32">
    <source ref="4"/>
</evidence>
<evidence type="ECO:0000305" key="33"/>
<evidence type="ECO:0000312" key="34">
    <source>
        <dbReference type="HGNC" id="HGNC:8768"/>
    </source>
</evidence>
<evidence type="ECO:0007744" key="35">
    <source>
        <dbReference type="PDB" id="4BUR"/>
    </source>
</evidence>
<evidence type="ECO:0007744" key="36">
    <source>
        <dbReference type="PDB" id="4BV6"/>
    </source>
</evidence>
<evidence type="ECO:0007744" key="37">
    <source>
        <dbReference type="PDB" id="5FS6"/>
    </source>
</evidence>
<evidence type="ECO:0007744" key="38">
    <source>
        <dbReference type="PDB" id="5FS7"/>
    </source>
</evidence>
<evidence type="ECO:0007744" key="39">
    <source>
        <dbReference type="PDB" id="5FS8"/>
    </source>
</evidence>
<evidence type="ECO:0007744" key="40">
    <source>
        <dbReference type="PDB" id="5FS9"/>
    </source>
</evidence>
<evidence type="ECO:0007744" key="41">
    <source>
        <dbReference type="PDB" id="5KVH"/>
    </source>
</evidence>
<evidence type="ECO:0007744" key="42">
    <source>
        <dbReference type="PDB" id="5KVI"/>
    </source>
</evidence>
<evidence type="ECO:0007744" key="43">
    <source>
    </source>
</evidence>
<evidence type="ECO:0007744" key="44">
    <source>
    </source>
</evidence>
<evidence type="ECO:0007744" key="45">
    <source>
    </source>
</evidence>
<evidence type="ECO:0007744" key="46">
    <source>
    </source>
</evidence>
<evidence type="ECO:0007744" key="47">
    <source>
    </source>
</evidence>
<evidence type="ECO:0007829" key="48">
    <source>
        <dbReference type="PDB" id="4BUR"/>
    </source>
</evidence>
<evidence type="ECO:0007829" key="49">
    <source>
        <dbReference type="PDB" id="5FS8"/>
    </source>
</evidence>
<evidence type="ECO:0007829" key="50">
    <source>
        <dbReference type="PDB" id="5KVI"/>
    </source>
</evidence>
<keyword id="KW-0002">3D-structure</keyword>
<keyword id="KW-0007">Acetylation</keyword>
<keyword id="KW-0025">Alternative splicing</keyword>
<keyword id="KW-0053">Apoptosis</keyword>
<keyword id="KW-0144">Charcot-Marie-Tooth disease</keyword>
<keyword id="KW-0963">Cytoplasm</keyword>
<keyword id="KW-0209">Deafness</keyword>
<keyword id="KW-0903">Direct protein sequencing</keyword>
<keyword id="KW-0225">Disease variant</keyword>
<keyword id="KW-0238">DNA-binding</keyword>
<keyword id="KW-0242">Dwarfism</keyword>
<keyword id="KW-0274">FAD</keyword>
<keyword id="KW-0285">Flavoprotein</keyword>
<keyword id="KW-0991">Intellectual disability</keyword>
<keyword id="KW-1017">Isopeptide bond</keyword>
<keyword id="KW-0472">Membrane</keyword>
<keyword id="KW-0496">Mitochondrion</keyword>
<keyword id="KW-0999">Mitochondrion inner membrane</keyword>
<keyword id="KW-0520">NAD</keyword>
<keyword id="KW-0523">Neurodegeneration</keyword>
<keyword id="KW-0622">Neuropathy</keyword>
<keyword id="KW-0539">Nucleus</keyword>
<keyword id="KW-0560">Oxidoreductase</keyword>
<keyword id="KW-0597">Phosphoprotein</keyword>
<keyword id="KW-1274">Primary mitochondrial disease</keyword>
<keyword id="KW-1267">Proteomics identification</keyword>
<keyword id="KW-1185">Reference proteome</keyword>
<keyword id="KW-0809">Transit peptide</keyword>
<keyword id="KW-0832">Ubl conjugation</keyword>
<protein>
    <recommendedName>
        <fullName evidence="33">Apoptosis-inducing factor 1, mitochondrial</fullName>
        <ecNumber evidence="17 18 24">1.6.99.-</ecNumber>
    </recommendedName>
    <alternativeName>
        <fullName>Programmed cell death protein 8</fullName>
    </alternativeName>
</protein>
<gene>
    <name evidence="34" type="primary">AIFM1</name>
    <name type="synonym">AIF</name>
    <name type="synonym">PDCD8</name>
</gene>
<proteinExistence type="evidence at protein level"/>
<organism>
    <name type="scientific">Homo sapiens</name>
    <name type="common">Human</name>
    <dbReference type="NCBI Taxonomy" id="9606"/>
    <lineage>
        <taxon>Eukaryota</taxon>
        <taxon>Metazoa</taxon>
        <taxon>Chordata</taxon>
        <taxon>Craniata</taxon>
        <taxon>Vertebrata</taxon>
        <taxon>Euteleostomi</taxon>
        <taxon>Mammalia</taxon>
        <taxon>Eutheria</taxon>
        <taxon>Euarchontoglires</taxon>
        <taxon>Primates</taxon>
        <taxon>Haplorrhini</taxon>
        <taxon>Catarrhini</taxon>
        <taxon>Hominidae</taxon>
        <taxon>Homo</taxon>
    </lineage>
</organism>
<accession>O95831</accession>
<accession>A4QPB4</accession>
<accession>B1ALN1</accession>
<accession>B2RB08</accession>
<accession>D3DTE9</accession>
<accession>E9PRR0</accession>
<accession>Q1L6K4</accession>
<accession>Q1L6K6</accession>
<accession>Q2QKE4</accession>
<accession>Q5JUZ7</accession>
<accession>Q6I9X6</accession>
<accession>Q9Y3I3</accession>
<accession>Q9Y3I4</accession>
<reference key="1">
    <citation type="journal article" date="1999" name="Nature">
        <title>Molecular characterization of mitochondrial apoptosis-inducing factor.</title>
        <authorList>
            <person name="Susin S.A."/>
            <person name="Lorenzo H.K."/>
            <person name="Zamzami N."/>
            <person name="Marzo I."/>
            <person name="Snow B.E."/>
            <person name="Brothers G.M."/>
            <person name="Mangion J."/>
            <person name="Jacotot E."/>
            <person name="Costantini P."/>
            <person name="Loeffler M."/>
            <person name="Larochette N."/>
            <person name="Goodlett D.R."/>
            <person name="Aebersold R."/>
            <person name="Siderovski D.P."/>
            <person name="Penninger J.M."/>
            <person name="Kroemer G."/>
        </authorList>
    </citation>
    <scope>NUCLEOTIDE SEQUENCE [MRNA] (ISOFORM 1)</scope>
</reference>
<reference key="2">
    <citation type="journal article" date="2006" name="J. Biol. Chem.">
        <title>AIFsh, a novel apoptosis-inducing factor (AIF) pro-apoptotic isoform with potential pathological relevance in human cancer.</title>
        <authorList>
            <person name="Delettre C."/>
            <person name="Yuste V.J."/>
            <person name="Moubarak R.S."/>
            <person name="Bras M."/>
            <person name="Lesbordes-Brion J.-C."/>
            <person name="Petres S."/>
            <person name="Bellalou J."/>
            <person name="Susin S.A."/>
        </authorList>
    </citation>
    <scope>NUCLEOTIDE SEQUENCE [MRNA] (ISOFORM 5)</scope>
    <scope>PROTEIN SEQUENCE OF N-TERMINUS</scope>
    <scope>SUBCELLULAR LOCATION (ISOFORM 5)</scope>
    <scope>TISSUE SPECIFICITY (ISOFORM 5)</scope>
    <scope>FUNCTION (ISOFORM 5)</scope>
    <scope>INDUCTION BY GAMMA-IRRADIATION (ISOFORM 5)</scope>
</reference>
<reference key="3">
    <citation type="journal article" date="2006" name="J. Biol. Chem.">
        <title>Identification and characterization of AIFsh2, a mitochondrial apoptosis-inducing factor (AIF) isoform with NADH oxidase activity.</title>
        <authorList>
            <person name="Delettre C."/>
            <person name="Yuste V.J."/>
            <person name="Moubarak R.S."/>
            <person name="Bras M."/>
            <person name="Robert N."/>
            <person name="Susin S.A."/>
        </authorList>
    </citation>
    <scope>NUCLEOTIDE SEQUENCE [MRNA] (ISOFORMS 4 AND 6)</scope>
    <scope>ALTERNATIVE SPLICING</scope>
    <scope>FUNCTION (ISOFORM 4)</scope>
    <scope>SUBCELLULAR LOCATION (ISOFORM 4)</scope>
    <scope>TISSUE SPECIFICITY (ISOFORMS 4 AND 6)</scope>
</reference>
<reference key="4">
    <citation type="submission" date="1999-04" db="EMBL/GenBank/DDBJ databases">
        <authorList>
            <person name="Rhodes S."/>
        </authorList>
    </citation>
    <scope>NUCLEOTIDE SEQUENCE [MRNA] (ISOFORMS 2 AND 3)</scope>
</reference>
<reference key="5">
    <citation type="journal article" date="2004" name="Nat. Genet.">
        <title>Complete sequencing and characterization of 21,243 full-length human cDNAs.</title>
        <authorList>
            <person name="Ota T."/>
            <person name="Suzuki Y."/>
            <person name="Nishikawa T."/>
            <person name="Otsuki T."/>
            <person name="Sugiyama T."/>
            <person name="Irie R."/>
            <person name="Wakamatsu A."/>
            <person name="Hayashi K."/>
            <person name="Sato H."/>
            <person name="Nagai K."/>
            <person name="Kimura K."/>
            <person name="Makita H."/>
            <person name="Sekine M."/>
            <person name="Obayashi M."/>
            <person name="Nishi T."/>
            <person name="Shibahara T."/>
            <person name="Tanaka T."/>
            <person name="Ishii S."/>
            <person name="Yamamoto J."/>
            <person name="Saito K."/>
            <person name="Kawai Y."/>
            <person name="Isono Y."/>
            <person name="Nakamura Y."/>
            <person name="Nagahari K."/>
            <person name="Murakami K."/>
            <person name="Yasuda T."/>
            <person name="Iwayanagi T."/>
            <person name="Wagatsuma M."/>
            <person name="Shiratori A."/>
            <person name="Sudo H."/>
            <person name="Hosoiri T."/>
            <person name="Kaku Y."/>
            <person name="Kodaira H."/>
            <person name="Kondo H."/>
            <person name="Sugawara M."/>
            <person name="Takahashi M."/>
            <person name="Kanda K."/>
            <person name="Yokoi T."/>
            <person name="Furuya T."/>
            <person name="Kikkawa E."/>
            <person name="Omura Y."/>
            <person name="Abe K."/>
            <person name="Kamihara K."/>
            <person name="Katsuta N."/>
            <person name="Sato K."/>
            <person name="Tanikawa M."/>
            <person name="Yamazaki M."/>
            <person name="Ninomiya K."/>
            <person name="Ishibashi T."/>
            <person name="Yamashita H."/>
            <person name="Murakawa K."/>
            <person name="Fujimori K."/>
            <person name="Tanai H."/>
            <person name="Kimata M."/>
            <person name="Watanabe M."/>
            <person name="Hiraoka S."/>
            <person name="Chiba Y."/>
            <person name="Ishida S."/>
            <person name="Ono Y."/>
            <person name="Takiguchi S."/>
            <person name="Watanabe S."/>
            <person name="Yosida M."/>
            <person name="Hotuta T."/>
            <person name="Kusano J."/>
            <person name="Kanehori K."/>
            <person name="Takahashi-Fujii A."/>
            <person name="Hara H."/>
            <person name="Tanase T.-O."/>
            <person name="Nomura Y."/>
            <person name="Togiya S."/>
            <person name="Komai F."/>
            <person name="Hara R."/>
            <person name="Takeuchi K."/>
            <person name="Arita M."/>
            <person name="Imose N."/>
            <person name="Musashino K."/>
            <person name="Yuuki H."/>
            <person name="Oshima A."/>
            <person name="Sasaki N."/>
            <person name="Aotsuka S."/>
            <person name="Yoshikawa Y."/>
            <person name="Matsunawa H."/>
            <person name="Ichihara T."/>
            <person name="Shiohata N."/>
            <person name="Sano S."/>
            <person name="Moriya S."/>
            <person name="Momiyama H."/>
            <person name="Satoh N."/>
            <person name="Takami S."/>
            <person name="Terashima Y."/>
            <person name="Suzuki O."/>
            <person name="Nakagawa S."/>
            <person name="Senoh A."/>
            <person name="Mizoguchi H."/>
            <person name="Goto Y."/>
            <person name="Shimizu F."/>
            <person name="Wakebe H."/>
            <person name="Hishigaki H."/>
            <person name="Watanabe T."/>
            <person name="Sugiyama A."/>
            <person name="Takemoto M."/>
            <person name="Kawakami B."/>
            <person name="Yamazaki M."/>
            <person name="Watanabe K."/>
            <person name="Kumagai A."/>
            <person name="Itakura S."/>
            <person name="Fukuzumi Y."/>
            <person name="Fujimori Y."/>
            <person name="Komiyama M."/>
            <person name="Tashiro H."/>
            <person name="Tanigami A."/>
            <person name="Fujiwara T."/>
            <person name="Ono T."/>
            <person name="Yamada K."/>
            <person name="Fujii Y."/>
            <person name="Ozaki K."/>
            <person name="Hirao M."/>
            <person name="Ohmori Y."/>
            <person name="Kawabata A."/>
            <person name="Hikiji T."/>
            <person name="Kobatake N."/>
            <person name="Inagaki H."/>
            <person name="Ikema Y."/>
            <person name="Okamoto S."/>
            <person name="Okitani R."/>
            <person name="Kawakami T."/>
            <person name="Noguchi S."/>
            <person name="Itoh T."/>
            <person name="Shigeta K."/>
            <person name="Senba T."/>
            <person name="Matsumura K."/>
            <person name="Nakajima Y."/>
            <person name="Mizuno T."/>
            <person name="Morinaga M."/>
            <person name="Sasaki M."/>
            <person name="Togashi T."/>
            <person name="Oyama M."/>
            <person name="Hata H."/>
            <person name="Watanabe M."/>
            <person name="Komatsu T."/>
            <person name="Mizushima-Sugano J."/>
            <person name="Satoh T."/>
            <person name="Shirai Y."/>
            <person name="Takahashi Y."/>
            <person name="Nakagawa K."/>
            <person name="Okumura K."/>
            <person name="Nagase T."/>
            <person name="Nomura N."/>
            <person name="Kikuchi H."/>
            <person name="Masuho Y."/>
            <person name="Yamashita R."/>
            <person name="Nakai K."/>
            <person name="Yada T."/>
            <person name="Nakamura Y."/>
            <person name="Ohara O."/>
            <person name="Isogai T."/>
            <person name="Sugano S."/>
        </authorList>
    </citation>
    <scope>NUCLEOTIDE SEQUENCE [LARGE SCALE MRNA] (ISOFORM 3)</scope>
    <source>
        <tissue>Kidney</tissue>
    </source>
</reference>
<reference key="6">
    <citation type="submission" date="2004-06" db="EMBL/GenBank/DDBJ databases">
        <title>Cloning of human full open reading frames in Gateway(TM) system entry vector (pDONR201).</title>
        <authorList>
            <person name="Ebert L."/>
            <person name="Schick M."/>
            <person name="Neubert P."/>
            <person name="Schatten R."/>
            <person name="Henze S."/>
            <person name="Korn B."/>
        </authorList>
    </citation>
    <scope>NUCLEOTIDE SEQUENCE [LARGE SCALE MRNA] (ISOFORM 1)</scope>
</reference>
<reference key="7">
    <citation type="journal article" date="2005" name="Nature">
        <title>The DNA sequence of the human X chromosome.</title>
        <authorList>
            <person name="Ross M.T."/>
            <person name="Grafham D.V."/>
            <person name="Coffey A.J."/>
            <person name="Scherer S."/>
            <person name="McLay K."/>
            <person name="Muzny D."/>
            <person name="Platzer M."/>
            <person name="Howell G.R."/>
            <person name="Burrows C."/>
            <person name="Bird C.P."/>
            <person name="Frankish A."/>
            <person name="Lovell F.L."/>
            <person name="Howe K.L."/>
            <person name="Ashurst J.L."/>
            <person name="Fulton R.S."/>
            <person name="Sudbrak R."/>
            <person name="Wen G."/>
            <person name="Jones M.C."/>
            <person name="Hurles M.E."/>
            <person name="Andrews T.D."/>
            <person name="Scott C.E."/>
            <person name="Searle S."/>
            <person name="Ramser J."/>
            <person name="Whittaker A."/>
            <person name="Deadman R."/>
            <person name="Carter N.P."/>
            <person name="Hunt S.E."/>
            <person name="Chen R."/>
            <person name="Cree A."/>
            <person name="Gunaratne P."/>
            <person name="Havlak P."/>
            <person name="Hodgson A."/>
            <person name="Metzker M.L."/>
            <person name="Richards S."/>
            <person name="Scott G."/>
            <person name="Steffen D."/>
            <person name="Sodergren E."/>
            <person name="Wheeler D.A."/>
            <person name="Worley K.C."/>
            <person name="Ainscough R."/>
            <person name="Ambrose K.D."/>
            <person name="Ansari-Lari M.A."/>
            <person name="Aradhya S."/>
            <person name="Ashwell R.I."/>
            <person name="Babbage A.K."/>
            <person name="Bagguley C.L."/>
            <person name="Ballabio A."/>
            <person name="Banerjee R."/>
            <person name="Barker G.E."/>
            <person name="Barlow K.F."/>
            <person name="Barrett I.P."/>
            <person name="Bates K.N."/>
            <person name="Beare D.M."/>
            <person name="Beasley H."/>
            <person name="Beasley O."/>
            <person name="Beck A."/>
            <person name="Bethel G."/>
            <person name="Blechschmidt K."/>
            <person name="Brady N."/>
            <person name="Bray-Allen S."/>
            <person name="Bridgeman A.M."/>
            <person name="Brown A.J."/>
            <person name="Brown M.J."/>
            <person name="Bonnin D."/>
            <person name="Bruford E.A."/>
            <person name="Buhay C."/>
            <person name="Burch P."/>
            <person name="Burford D."/>
            <person name="Burgess J."/>
            <person name="Burrill W."/>
            <person name="Burton J."/>
            <person name="Bye J.M."/>
            <person name="Carder C."/>
            <person name="Carrel L."/>
            <person name="Chako J."/>
            <person name="Chapman J.C."/>
            <person name="Chavez D."/>
            <person name="Chen E."/>
            <person name="Chen G."/>
            <person name="Chen Y."/>
            <person name="Chen Z."/>
            <person name="Chinault C."/>
            <person name="Ciccodicola A."/>
            <person name="Clark S.Y."/>
            <person name="Clarke G."/>
            <person name="Clee C.M."/>
            <person name="Clegg S."/>
            <person name="Clerc-Blankenburg K."/>
            <person name="Clifford K."/>
            <person name="Cobley V."/>
            <person name="Cole C.G."/>
            <person name="Conquer J.S."/>
            <person name="Corby N."/>
            <person name="Connor R.E."/>
            <person name="David R."/>
            <person name="Davies J."/>
            <person name="Davis C."/>
            <person name="Davis J."/>
            <person name="Delgado O."/>
            <person name="Deshazo D."/>
            <person name="Dhami P."/>
            <person name="Ding Y."/>
            <person name="Dinh H."/>
            <person name="Dodsworth S."/>
            <person name="Draper H."/>
            <person name="Dugan-Rocha S."/>
            <person name="Dunham A."/>
            <person name="Dunn M."/>
            <person name="Durbin K.J."/>
            <person name="Dutta I."/>
            <person name="Eades T."/>
            <person name="Ellwood M."/>
            <person name="Emery-Cohen A."/>
            <person name="Errington H."/>
            <person name="Evans K.L."/>
            <person name="Faulkner L."/>
            <person name="Francis F."/>
            <person name="Frankland J."/>
            <person name="Fraser A.E."/>
            <person name="Galgoczy P."/>
            <person name="Gilbert J."/>
            <person name="Gill R."/>
            <person name="Gloeckner G."/>
            <person name="Gregory S.G."/>
            <person name="Gribble S."/>
            <person name="Griffiths C."/>
            <person name="Grocock R."/>
            <person name="Gu Y."/>
            <person name="Gwilliam R."/>
            <person name="Hamilton C."/>
            <person name="Hart E.A."/>
            <person name="Hawes A."/>
            <person name="Heath P.D."/>
            <person name="Heitmann K."/>
            <person name="Hennig S."/>
            <person name="Hernandez J."/>
            <person name="Hinzmann B."/>
            <person name="Ho S."/>
            <person name="Hoffs M."/>
            <person name="Howden P.J."/>
            <person name="Huckle E.J."/>
            <person name="Hume J."/>
            <person name="Hunt P.J."/>
            <person name="Hunt A.R."/>
            <person name="Isherwood J."/>
            <person name="Jacob L."/>
            <person name="Johnson D."/>
            <person name="Jones S."/>
            <person name="de Jong P.J."/>
            <person name="Joseph S.S."/>
            <person name="Keenan S."/>
            <person name="Kelly S."/>
            <person name="Kershaw J.K."/>
            <person name="Khan Z."/>
            <person name="Kioschis P."/>
            <person name="Klages S."/>
            <person name="Knights A.J."/>
            <person name="Kosiura A."/>
            <person name="Kovar-Smith C."/>
            <person name="Laird G.K."/>
            <person name="Langford C."/>
            <person name="Lawlor S."/>
            <person name="Leversha M."/>
            <person name="Lewis L."/>
            <person name="Liu W."/>
            <person name="Lloyd C."/>
            <person name="Lloyd D.M."/>
            <person name="Loulseged H."/>
            <person name="Loveland J.E."/>
            <person name="Lovell J.D."/>
            <person name="Lozado R."/>
            <person name="Lu J."/>
            <person name="Lyne R."/>
            <person name="Ma J."/>
            <person name="Maheshwari M."/>
            <person name="Matthews L.H."/>
            <person name="McDowall J."/>
            <person name="McLaren S."/>
            <person name="McMurray A."/>
            <person name="Meidl P."/>
            <person name="Meitinger T."/>
            <person name="Milne S."/>
            <person name="Miner G."/>
            <person name="Mistry S.L."/>
            <person name="Morgan M."/>
            <person name="Morris S."/>
            <person name="Mueller I."/>
            <person name="Mullikin J.C."/>
            <person name="Nguyen N."/>
            <person name="Nordsiek G."/>
            <person name="Nyakatura G."/>
            <person name="O'dell C.N."/>
            <person name="Okwuonu G."/>
            <person name="Palmer S."/>
            <person name="Pandian R."/>
            <person name="Parker D."/>
            <person name="Parrish J."/>
            <person name="Pasternak S."/>
            <person name="Patel D."/>
            <person name="Pearce A.V."/>
            <person name="Pearson D.M."/>
            <person name="Pelan S.E."/>
            <person name="Perez L."/>
            <person name="Porter K.M."/>
            <person name="Ramsey Y."/>
            <person name="Reichwald K."/>
            <person name="Rhodes S."/>
            <person name="Ridler K.A."/>
            <person name="Schlessinger D."/>
            <person name="Schueler M.G."/>
            <person name="Sehra H.K."/>
            <person name="Shaw-Smith C."/>
            <person name="Shen H."/>
            <person name="Sheridan E.M."/>
            <person name="Shownkeen R."/>
            <person name="Skuce C.D."/>
            <person name="Smith M.L."/>
            <person name="Sotheran E.C."/>
            <person name="Steingruber H.E."/>
            <person name="Steward C.A."/>
            <person name="Storey R."/>
            <person name="Swann R.M."/>
            <person name="Swarbreck D."/>
            <person name="Tabor P.E."/>
            <person name="Taudien S."/>
            <person name="Taylor T."/>
            <person name="Teague B."/>
            <person name="Thomas K."/>
            <person name="Thorpe A."/>
            <person name="Timms K."/>
            <person name="Tracey A."/>
            <person name="Trevanion S."/>
            <person name="Tromans A.C."/>
            <person name="d'Urso M."/>
            <person name="Verduzco D."/>
            <person name="Villasana D."/>
            <person name="Waldron L."/>
            <person name="Wall M."/>
            <person name="Wang Q."/>
            <person name="Warren J."/>
            <person name="Warry G.L."/>
            <person name="Wei X."/>
            <person name="West A."/>
            <person name="Whitehead S.L."/>
            <person name="Whiteley M.N."/>
            <person name="Wilkinson J.E."/>
            <person name="Willey D.L."/>
            <person name="Williams G."/>
            <person name="Williams L."/>
            <person name="Williamson A."/>
            <person name="Williamson H."/>
            <person name="Wilming L."/>
            <person name="Woodmansey R.L."/>
            <person name="Wray P.W."/>
            <person name="Yen J."/>
            <person name="Zhang J."/>
            <person name="Zhou J."/>
            <person name="Zoghbi H."/>
            <person name="Zorilla S."/>
            <person name="Buck D."/>
            <person name="Reinhardt R."/>
            <person name="Poustka A."/>
            <person name="Rosenthal A."/>
            <person name="Lehrach H."/>
            <person name="Meindl A."/>
            <person name="Minx P.J."/>
            <person name="Hillier L.W."/>
            <person name="Willard H.F."/>
            <person name="Wilson R.K."/>
            <person name="Waterston R.H."/>
            <person name="Rice C.M."/>
            <person name="Vaudin M."/>
            <person name="Coulson A."/>
            <person name="Nelson D.L."/>
            <person name="Weinstock G."/>
            <person name="Sulston J.E."/>
            <person name="Durbin R.M."/>
            <person name="Hubbard T."/>
            <person name="Gibbs R.A."/>
            <person name="Beck S."/>
            <person name="Rogers J."/>
            <person name="Bentley D.R."/>
        </authorList>
    </citation>
    <scope>NUCLEOTIDE SEQUENCE [LARGE SCALE GENOMIC DNA]</scope>
</reference>
<reference key="8">
    <citation type="submission" date="2005-09" db="EMBL/GenBank/DDBJ databases">
        <authorList>
            <person name="Mural R.J."/>
            <person name="Istrail S."/>
            <person name="Sutton G.G."/>
            <person name="Florea L."/>
            <person name="Halpern A.L."/>
            <person name="Mobarry C.M."/>
            <person name="Lippert R."/>
            <person name="Walenz B."/>
            <person name="Shatkay H."/>
            <person name="Dew I."/>
            <person name="Miller J.R."/>
            <person name="Flanigan M.J."/>
            <person name="Edwards N.J."/>
            <person name="Bolanos R."/>
            <person name="Fasulo D."/>
            <person name="Halldorsson B.V."/>
            <person name="Hannenhalli S."/>
            <person name="Turner R."/>
            <person name="Yooseph S."/>
            <person name="Lu F."/>
            <person name="Nusskern D.R."/>
            <person name="Shue B.C."/>
            <person name="Zheng X.H."/>
            <person name="Zhong F."/>
            <person name="Delcher A.L."/>
            <person name="Huson D.H."/>
            <person name="Kravitz S.A."/>
            <person name="Mouchard L."/>
            <person name="Reinert K."/>
            <person name="Remington K.A."/>
            <person name="Clark A.G."/>
            <person name="Waterman M.S."/>
            <person name="Eichler E.E."/>
            <person name="Adams M.D."/>
            <person name="Hunkapiller M.W."/>
            <person name="Myers E.W."/>
            <person name="Venter J.C."/>
        </authorList>
    </citation>
    <scope>NUCLEOTIDE SEQUENCE [LARGE SCALE GENOMIC DNA]</scope>
</reference>
<reference key="9">
    <citation type="journal article" date="2004" name="Genome Res.">
        <title>The status, quality, and expansion of the NIH full-length cDNA project: the Mammalian Gene Collection (MGC).</title>
        <authorList>
            <consortium name="The MGC Project Team"/>
        </authorList>
    </citation>
    <scope>NUCLEOTIDE SEQUENCE [LARGE SCALE MRNA] (ISOFORMS 1 AND 3)</scope>
    <source>
        <tissue>Brain</tissue>
    </source>
</reference>
<reference key="10">
    <citation type="journal article" date="2005" name="EMBO J.">
        <title>Export of mitochondrial AIF in response to proapoptotic stimuli depends on processing at the intermembrane space.</title>
        <authorList>
            <person name="Otera H."/>
            <person name="Ohsakaya S."/>
            <person name="Nagaura Z."/>
            <person name="Ishihara N."/>
            <person name="Mihara K."/>
        </authorList>
    </citation>
    <scope>PROTEIN SEQUENCE OF 55-59</scope>
    <scope>SUBCELLULAR LOCATION</scope>
    <scope>PROTEOLYTIC CLEAVAGE</scope>
</reference>
<reference key="11">
    <citation type="submission" date="1999-02" db="EMBL/GenBank/DDBJ databases">
        <authorList>
            <person name="Mei G."/>
            <person name="Yu W."/>
            <person name="Gibbs R.A."/>
        </authorList>
    </citation>
    <scope>NUCLEOTIDE SEQUENCE [LARGE SCALE MRNA] OF 171-613</scope>
    <source>
        <tissue>Brain</tissue>
    </source>
</reference>
<reference key="12">
    <citation type="journal article" date="2000" name="FEBS Lett.">
        <title>Apoptosis-inducing factor (AIF): a ubiquitous mitochondrial oxidoreductase involved in apoptosis.</title>
        <authorList>
            <person name="Daugas E."/>
            <person name="Nochy D."/>
            <person name="Ravagnan L."/>
            <person name="Loeffler M."/>
            <person name="Susin S.A."/>
            <person name="Zamzami N."/>
            <person name="Kroemer G."/>
        </authorList>
    </citation>
    <scope>REVIEW</scope>
</reference>
<reference key="13">
    <citation type="journal article" date="2006" name="FEBS Lett.">
        <title>Apoptosis-inducing factor (AIF) inhibits protein synthesis by interacting with the eukaryotic translation initiation factor 3 subunit p44 (eIF3g).</title>
        <authorList>
            <person name="Kim J.T."/>
            <person name="Kim K.D."/>
            <person name="Song E.Y."/>
            <person name="Lee H.G."/>
            <person name="Kim J.W."/>
            <person name="Kim J.W."/>
            <person name="Chae S.K."/>
            <person name="Kim E."/>
            <person name="Lee M.S."/>
            <person name="Yang Y."/>
            <person name="Lim J.S."/>
        </authorList>
    </citation>
    <scope>FUNCTION</scope>
    <scope>SUBCELLULAR LOCATION</scope>
    <scope>INTERACTION WITH EIF3G</scope>
</reference>
<reference key="14">
    <citation type="journal article" date="2008" name="Mol. Cell">
        <title>Kinase-selective enrichment enables quantitative phosphoproteomics of the kinome across the cell cycle.</title>
        <authorList>
            <person name="Daub H."/>
            <person name="Olsen J.V."/>
            <person name="Bairlein M."/>
            <person name="Gnad F."/>
            <person name="Oppermann F.S."/>
            <person name="Korner R."/>
            <person name="Greff Z."/>
            <person name="Keri G."/>
            <person name="Stemmann O."/>
            <person name="Mann M."/>
        </authorList>
    </citation>
    <scope>PHOSPHORYLATION [LARGE SCALE ANALYSIS] AT THR-105</scope>
    <scope>IDENTIFICATION BY MASS SPECTROMETRY [LARGE SCALE ANALYSIS]</scope>
    <source>
        <tissue>Cervix carcinoma</tissue>
    </source>
</reference>
<reference key="15">
    <citation type="journal article" date="2008" name="Mol. Cell. Biol.">
        <title>Apoptosis-inducing factor is a target for ubiquitination through interaction with XIAP.</title>
        <authorList>
            <person name="Wilkinson J.C."/>
            <person name="Wilkinson A.S."/>
            <person name="Galban S."/>
            <person name="Csomos R.A."/>
            <person name="Duckett C.S."/>
        </authorList>
    </citation>
    <scope>UBIQUITINATION BY XIAP/BIRC4</scope>
    <scope>INTERACTION WITH XIAP/BIRC4</scope>
</reference>
<reference key="16">
    <citation type="journal article" date="2008" name="Proc. Natl. Acad. Sci. U.S.A.">
        <title>A quantitative atlas of mitotic phosphorylation.</title>
        <authorList>
            <person name="Dephoure N."/>
            <person name="Zhou C."/>
            <person name="Villen J."/>
            <person name="Beausoleil S.A."/>
            <person name="Bakalarski C.E."/>
            <person name="Elledge S.J."/>
            <person name="Gygi S.P."/>
        </authorList>
    </citation>
    <scope>PHOSPHORYLATION [LARGE SCALE ANALYSIS] AT SER-268</scope>
    <scope>IDENTIFICATION BY MASS SPECTROMETRY [LARGE SCALE ANALYSIS]</scope>
    <source>
        <tissue>Cervix carcinoma</tissue>
    </source>
</reference>
<reference key="17">
    <citation type="journal article" date="2009" name="Apoptosis">
        <title>Apoptosis-inducing factor plays a critical role in caspase-independent, pyknotic cell death in hydrogen peroxide-exposed cells.</title>
        <authorList>
            <person name="Son Y.O."/>
            <person name="Jang Y.S."/>
            <person name="Heo J.S."/>
            <person name="Chung W.T."/>
            <person name="Choi K.C."/>
            <person name="Lee J.C."/>
        </authorList>
    </citation>
    <scope>FUNCTION</scope>
</reference>
<reference key="18">
    <citation type="journal article" date="2010" name="Cell Death Differ.">
        <title>A brain-specific isoform of mitochondrial apoptosis-inducing factor: AIF2.</title>
        <authorList>
            <person name="Hangen E."/>
            <person name="De Zio D."/>
            <person name="Bordi M."/>
            <person name="Zhu C."/>
            <person name="Dessen P."/>
            <person name="Caffin F."/>
            <person name="Lachkar S."/>
            <person name="Perfettini J.L."/>
            <person name="Lazar V."/>
            <person name="Benard J."/>
            <person name="Fimia G.M."/>
            <person name="Piacentini M."/>
            <person name="Harper F."/>
            <person name="Pierron G."/>
            <person name="Vicencio J.M."/>
            <person name="Benit P."/>
            <person name="de Andrade A."/>
            <person name="Hoglinger G."/>
            <person name="Culmsee C."/>
            <person name="Rustin P."/>
            <person name="Blomgren K."/>
            <person name="Cecconi F."/>
            <person name="Kroemer G."/>
            <person name="Modjtahedi N."/>
        </authorList>
    </citation>
    <scope>ALTERNATIVE SPLICING (ISOFORM 3)</scope>
    <scope>SUBCELLULAR LOCATION (ISOFORM 3)</scope>
    <scope>SUBUNIT</scope>
</reference>
<reference key="19">
    <citation type="journal article" date="2010" name="Cell Death Dis.">
        <title>Vital function of PRELI and essential requirement of its LEA motif.</title>
        <authorList>
            <person name="McKeller M.R."/>
            <person name="Herrera-Rodriguez S."/>
            <person name="Ma W."/>
            <person name="Ortiz-Quintero B."/>
            <person name="Rangel R."/>
            <person name="Cande C."/>
            <person name="Sims-Mourtada J.C."/>
            <person name="Melnikova V."/>
            <person name="Kashi C."/>
            <person name="Phan L.M."/>
            <person name="Chen Z."/>
            <person name="Huang P."/>
            <person name="Dunner K. Jr."/>
            <person name="Kroemer G."/>
            <person name="Singh K.K."/>
            <person name="Martinez-Valdez H."/>
        </authorList>
    </citation>
    <scope>INTERACTION WITH PRELID1</scope>
</reference>
<reference key="20">
    <citation type="journal article" date="2011" name="BMC Syst. Biol.">
        <title>Initial characterization of the human central proteome.</title>
        <authorList>
            <person name="Burkard T.R."/>
            <person name="Planyavsky M."/>
            <person name="Kaupe I."/>
            <person name="Breitwieser F.P."/>
            <person name="Buerckstuemmer T."/>
            <person name="Bennett K.L."/>
            <person name="Superti-Furga G."/>
            <person name="Colinge J."/>
        </authorList>
    </citation>
    <scope>IDENTIFICATION BY MASS SPECTROMETRY [LARGE SCALE ANALYSIS]</scope>
</reference>
<reference key="21">
    <citation type="journal article" date="2011" name="Biochemistry">
        <title>Nondegradative ubiquitination of apoptosis inducing factor (AIF) by X-linked inhibitor of apoptosis at a residue critical for AIF-mediated chromatin degradation.</title>
        <authorList>
            <person name="Lewis E.M."/>
            <person name="Wilkinson A.S."/>
            <person name="Davis N.Y."/>
            <person name="Horita D.A."/>
            <person name="Wilkinson J.C."/>
        </authorList>
    </citation>
    <scope>UBIQUITINATION AT LYS-255 BY XIAP/BIRC4</scope>
</reference>
<reference key="22">
    <citation type="journal article" date="2013" name="J. Proteome Res.">
        <title>Toward a comprehensive characterization of a human cancer cell phosphoproteome.</title>
        <authorList>
            <person name="Zhou H."/>
            <person name="Di Palma S."/>
            <person name="Preisinger C."/>
            <person name="Peng M."/>
            <person name="Polat A.N."/>
            <person name="Heck A.J."/>
            <person name="Mohammed S."/>
        </authorList>
    </citation>
    <scope>PHOSPHORYLATION [LARGE SCALE ANALYSIS] AT THR-105; SER-116; SER-268 AND SER-292</scope>
    <scope>IDENTIFICATION BY MASS SPECTROMETRY [LARGE SCALE ANALYSIS]</scope>
    <source>
        <tissue>Cervix carcinoma</tissue>
        <tissue>Erythroleukemia</tissue>
    </source>
</reference>
<reference key="23">
    <citation type="journal article" date="2014" name="J. Proteomics">
        <title>An enzyme assisted RP-RPLC approach for in-depth analysis of human liver phosphoproteome.</title>
        <authorList>
            <person name="Bian Y."/>
            <person name="Song C."/>
            <person name="Cheng K."/>
            <person name="Dong M."/>
            <person name="Wang F."/>
            <person name="Huang J."/>
            <person name="Sun D."/>
            <person name="Wang L."/>
            <person name="Ye M."/>
            <person name="Zou H."/>
        </authorList>
    </citation>
    <scope>PHOSPHORYLATION [LARGE SCALE ANALYSIS] AT SER-116; SER-118; SER-268; SER-371; THR-521; SER-524 AND SER-530</scope>
    <scope>IDENTIFICATION BY MASS SPECTROMETRY [LARGE SCALE ANALYSIS]</scope>
    <source>
        <tissue>Liver</tissue>
    </source>
</reference>
<reference key="24">
    <citation type="journal article" date="2015" name="Mol. Cell">
        <title>Interaction between AIF and CHCHD4 Regulates Respiratory Chain Biogenesis.</title>
        <authorList>
            <person name="Hangen E."/>
            <person name="Feraud O."/>
            <person name="Lachkar S."/>
            <person name="Mou H."/>
            <person name="Doti N."/>
            <person name="Fimia G.M."/>
            <person name="Lam N.V."/>
            <person name="Zhu C."/>
            <person name="Godin I."/>
            <person name="Muller K."/>
            <person name="Chatzi A."/>
            <person name="Nuebel E."/>
            <person name="Ciccosanti F."/>
            <person name="Flamant S."/>
            <person name="Benit P."/>
            <person name="Perfettini J.L."/>
            <person name="Sauvat A."/>
            <person name="Bennaceur-Griscelli A."/>
            <person name="Ser-Le Roux K."/>
            <person name="Gonin P."/>
            <person name="Tokatlidis K."/>
            <person name="Rustin P."/>
            <person name="Piacentini M."/>
            <person name="Ruvo M."/>
            <person name="Blomgren K."/>
            <person name="Kroemer G."/>
            <person name="Modjtahedi N."/>
        </authorList>
    </citation>
    <scope>FUNCTION</scope>
    <scope>INTERACTION WITH CHCHD4</scope>
    <scope>SUBCELLULAR LOCATION</scope>
    <scope>CHARACTERIZATION OF VARIANT COXPD6 GLU-308</scope>
    <scope>CHARACTERIZATION OF VARIANT CMTX4 VAL-493</scope>
</reference>
<reference key="25">
    <citation type="journal article" date="2015" name="Proteomics">
        <title>N-terminome analysis of the human mitochondrial proteome.</title>
        <authorList>
            <person name="Vaca Jacome A.S."/>
            <person name="Rabilloud T."/>
            <person name="Schaeffer-Reiss C."/>
            <person name="Rompais M."/>
            <person name="Ayoub D."/>
            <person name="Lane L."/>
            <person name="Bairoch A."/>
            <person name="Van Dorsselaer A."/>
            <person name="Carapito C."/>
        </authorList>
    </citation>
    <scope>CLEAVAGE OF TRANSIT PEPTIDE [LARGE SCALE ANALYSIS] AFTER MET-54</scope>
    <scope>IDENTIFICATION BY MASS SPECTROMETRY [LARGE SCALE ANALYSIS]</scope>
</reference>
<reference key="26">
    <citation type="journal article" date="2021" name="J. Biol. Chem.">
        <title>The 89-kDa PARP1 cleavage fragment serves as a cytoplasmic PAR carrier to induce AIF-mediated apoptosis.</title>
        <authorList>
            <person name="Mashimo M."/>
            <person name="Onishi M."/>
            <person name="Uno A."/>
            <person name="Tanimichi A."/>
            <person name="Nobeyama A."/>
            <person name="Mori M."/>
            <person name="Yamada S."/>
            <person name="Negi S."/>
            <person name="Bu X."/>
            <person name="Kato J."/>
            <person name="Moss J."/>
            <person name="Sanada N."/>
            <person name="Kizu R."/>
            <person name="Fujii T."/>
        </authorList>
    </citation>
    <scope>FUNCTION</scope>
    <scope>SUBCELLULAR LOCATION</scope>
    <scope>INTERACTION WITH PARP1</scope>
</reference>
<reference key="27">
    <citation type="journal article" date="2002" name="Nat. Struct. Biol.">
        <title>DNA binding is required for the apoptogenic action of apoptosis inducing factor.</title>
        <authorList>
            <person name="Ye H."/>
            <person name="Cande C."/>
            <person name="Stephanou N.C."/>
            <person name="Jiang S."/>
            <person name="Gurbuxani S."/>
            <person name="Larochette N."/>
            <person name="Daugas E."/>
            <person name="Garrido C."/>
            <person name="Kroemer G."/>
            <person name="Wu H."/>
        </authorList>
    </citation>
    <scope>X-RAY CRYSTALLOGRAPHY (1.8 ANGSTROMS) OF 121-613 IN COMPLEX WITH FAD</scope>
    <scope>SUBCELLULAR LOCATION</scope>
    <scope>DNA-BINDING</scope>
</reference>
<reference evidence="35 36" key="28">
    <citation type="journal article" date="2014" name="Biochemistry">
        <title>Structural insights into the coenzyme mediated monomer-dimer transition of the pro-apoptotic apoptosis inducing factor.</title>
        <authorList>
            <person name="Ferreira P."/>
            <person name="Villanueva R."/>
            <person name="Martinez-Julvez M."/>
            <person name="Herguedas B."/>
            <person name="Marcuello C."/>
            <person name="Fernandez-Silva P."/>
            <person name="Cabon L."/>
            <person name="Hermoso J.A."/>
            <person name="Lostao A."/>
            <person name="Susin S.A."/>
            <person name="Medina M."/>
        </authorList>
    </citation>
    <scope>X-RAY CRYSTALLOGRAPHY (1.80 ANGSTROMS) OF 121-613 IN COMPLEX WITH FAD AND NAD</scope>
    <scope>SUBUNIT</scope>
    <scope>MUTAGENESIS OF 413-GLU--ARG-430</scope>
    <scope>SUBCELLULAR LOCATION</scope>
    <scope>COFACTOR</scope>
    <scope>BIOPHYSICOCHEMICAL PROPERTIES</scope>
    <scope>FAD-BINDING</scope>
    <scope>NAD-BINDING</scope>
    <scope>CATALYTIC ACTIVITY</scope>
</reference>
<reference evidence="37 38 39 40" key="29">
    <citation type="journal article" date="2016" name="J. Mol. Biol.">
        <title>Structure/Function Relations in AIFM1 Variants Associated with Neurodegenerative Disorders.</title>
        <authorList>
            <person name="Sevrioukova I.F."/>
        </authorList>
    </citation>
    <scope>X-RAY CRYSTALLOGRAPHY (1.40 ANGSTROMS) OF 103-613 IN COMPLEX WITH FAD</scope>
    <scope>CHARACTERIZATION OF VARIANT SER-262</scope>
    <scope>CHARACTERIZATION OF VARIANTS COXPD6 LEU-243; GLU-308 AND GLU-338</scope>
    <scope>FUNCTION</scope>
    <scope>DNA-BINDING</scope>
    <scope>FAD-BINDING</scope>
    <scope>CATALYTIC ACTIVITY</scope>
    <scope>COFACTOR</scope>
</reference>
<reference key="30">
    <citation type="journal article" date="2012" name="Am. J. Hum. Genet.">
        <title>Cowchock syndrome is associated with a mutation in apoptosis-inducing factor.</title>
        <authorList>
            <person name="Rinaldi C."/>
            <person name="Grunseich C."/>
            <person name="Sevrioukova I.F."/>
            <person name="Schindler A."/>
            <person name="Horkayne-Szakaly I."/>
            <person name="Lamperti C."/>
            <person name="Landoure G."/>
            <person name="Kennerson M.L."/>
            <person name="Burnett B.G."/>
            <person name="Boennemann C."/>
            <person name="Biesecker L.G."/>
            <person name="Ghezzi D."/>
            <person name="Zeviani M."/>
            <person name="Fischbeck K.H."/>
        </authorList>
    </citation>
    <scope>X-RAY CRYSTALLOGRAPHY (2.4 ANGSTROMS) OF 103-613 IN COMPLEX WITH FAD</scope>
    <scope>FUNCTION</scope>
    <scope>COFACTOR</scope>
    <scope>BIOPHYSICOCHEMICAL PROPERTIES</scope>
    <scope>DNA-BINDING</scope>
    <scope>SUBUNIT</scope>
    <scope>SUBCELLULAR LOCATION</scope>
    <scope>TISSUE SPECIFICITY</scope>
    <scope>VARIANT CMTX4 VAL-493</scope>
    <scope>CHARACTERIZATION OF VARIANT CMTX4 VAL-493</scope>
    <scope>CATALYTIC ACTIVITY</scope>
</reference>
<reference evidence="41 42" key="31">
    <citation type="journal article" date="2016" name="Structure">
        <title>Defining NADH-Driven Allostery Regulating Apoptosis-Inducing Factor.</title>
        <authorList>
            <person name="Brosey C.A."/>
            <person name="Ho C."/>
            <person name="Long W.Z."/>
            <person name="Singh S."/>
            <person name="Burnett K."/>
            <person name="Hura G.L."/>
            <person name="Nix J.C."/>
            <person name="Bowman G.R."/>
            <person name="Ellenberger T."/>
            <person name="Tainer J.A."/>
        </authorList>
    </citation>
    <scope>X-RAY CRYSTALLOGRAPHY (2.00 ANGSTROMS) OF 78-613 IN COMPLEX WITH FAD</scope>
    <scope>SUBUNIT</scope>
    <scope>MUTAGENESIS OF TRP-196; 443-TYR--ILE-445; HIS-454; TRP-477; SER-480; ASP-485; ARG-529; GLU-531; GLU-533 AND GLU-535</scope>
    <scope>COFACTOR</scope>
    <scope>FAD-BINDING</scope>
</reference>
<reference key="32">
    <citation type="journal article" date="2010" name="Am. J. Hum. Genet.">
        <title>Severe X-linked mitochondrial encephalomyopathy associated with a mutation in apoptosis-inducing factor.</title>
        <authorList>
            <person name="Ghezzi D."/>
            <person name="Sevrioukova I."/>
            <person name="Invernizzi F."/>
            <person name="Lamperti C."/>
            <person name="Mora M."/>
            <person name="D'Adamo P."/>
            <person name="Novara F."/>
            <person name="Zuffardi O."/>
            <person name="Uziel G."/>
            <person name="Zeviani M."/>
        </authorList>
    </citation>
    <scope>VARIANT COXPD6 ARG-201 DEL</scope>
    <scope>CHARACTERIZATION OF VARIANT COXPD6 ARG-201 DEL</scope>
    <scope>FUNCTION</scope>
</reference>
<reference key="33">
    <citation type="journal article" date="2011" name="Mol. Genet. Metab.">
        <title>Early prenatal ventriculomegaly due to an AIFM1 mutation identified by linkage analysis and whole exome sequencing.</title>
        <authorList>
            <person name="Berger I."/>
            <person name="Ben-Neriah Z."/>
            <person name="Dor-Wolman T."/>
            <person name="Shaag A."/>
            <person name="Saada A."/>
            <person name="Zenvirt S."/>
            <person name="Raas-Rothschild A."/>
            <person name="Nadjari M."/>
            <person name="Kaestner K.H."/>
            <person name="Elpeleg O."/>
        </authorList>
    </citation>
    <scope>VARIANT COXPD6 GLU-308</scope>
</reference>
<reference key="34">
    <citation type="journal article" date="2015" name="J. Med. Genet.">
        <title>Mutations in apoptosis-inducing factor cause X-linked recessive auditory neuropathy spectrum disorder.</title>
        <authorList>
            <person name="Zong L."/>
            <person name="Guan J."/>
            <person name="Ealy M."/>
            <person name="Zhang Q."/>
            <person name="Wang D."/>
            <person name="Wang H."/>
            <person name="Zhao Y."/>
            <person name="Shen Z."/>
            <person name="Campbell C.A."/>
            <person name="Wang F."/>
            <person name="Yang J."/>
            <person name="Sun W."/>
            <person name="Lan L."/>
            <person name="Ding D."/>
            <person name="Xie L."/>
            <person name="Qi Y."/>
            <person name="Lou X."/>
            <person name="Huang X."/>
            <person name="Shi Q."/>
            <person name="Chang S."/>
            <person name="Xiong W."/>
            <person name="Yin Z."/>
            <person name="Yu N."/>
            <person name="Zhao H."/>
            <person name="Wang J."/>
            <person name="Wang J."/>
            <person name="Salvi R.J."/>
            <person name="Petit C."/>
            <person name="Smith R.J."/>
            <person name="Wang Q."/>
        </authorList>
    </citation>
    <scope>INVOLVEMENT IN DFNX5</scope>
    <scope>VARIANTS DFNX5 ALA-260; PHE-344; ARG-360; GLN-422; TRP-422; CYS-430; GLN-451; VAL-472; LEU-475; MET-498 AND MET-591</scope>
</reference>
<reference key="35">
    <citation type="journal article" date="2015" name="Mitochondrion">
        <title>From ventriculomegaly to severe muscular atrophy: Expansion of the clinical spectrum related to mutations in AIFM1.</title>
        <authorList>
            <person name="Kettwig M."/>
            <person name="Schubach M."/>
            <person name="Zimmermann F.A."/>
            <person name="Klinge L."/>
            <person name="Mayr J.A."/>
            <person name="Biskup S."/>
            <person name="Sperl W."/>
            <person name="Gaertner J."/>
            <person name="Huppke P."/>
        </authorList>
    </citation>
    <scope>VARIANT COXPD6 LEU-243</scope>
    <scope>CHARACTERIZATION OF VARIANT COXPD6 LEU-243</scope>
</reference>
<reference key="36">
    <citation type="journal article" date="2015" name="Neurology">
        <title>A slowly progressive mitochondrial encephalomyopathy widens the spectrum of AIFM1 disorders.</title>
        <authorList>
            <person name="Ardissone A."/>
            <person name="Piscosquito G."/>
            <person name="Legati A."/>
            <person name="Langella T."/>
            <person name="Lamantea E."/>
            <person name="Garavaglia B."/>
            <person name="Salsano E."/>
            <person name="Farina L."/>
            <person name="Moroni I."/>
            <person name="Pareyson D."/>
            <person name="Ghezzi D."/>
        </authorList>
    </citation>
    <scope>VARIANT SER-262</scope>
    <scope>CHARACTERIZATION OF VARIANT SER-262</scope>
</reference>
<reference key="37">
    <citation type="journal article" date="2016" name="Eur. J. Hum. Genet.">
        <title>A novel AIFM1 mutation expands the phenotype to an infantile motor neuron disease.</title>
        <authorList>
            <person name="Diodato D."/>
            <person name="Tasca G."/>
            <person name="Verrigni D."/>
            <person name="D'Amico A."/>
            <person name="Rizza T."/>
            <person name="Tozzi G."/>
            <person name="Martinelli D."/>
            <person name="Verardo M."/>
            <person name="Invernizzi F."/>
            <person name="Nasca A."/>
            <person name="Bellacchio E."/>
            <person name="Ghezzi D."/>
            <person name="Piemonte F."/>
            <person name="Dionisi-Vici C."/>
            <person name="Carrozzo R."/>
            <person name="Bertini E."/>
        </authorList>
    </citation>
    <scope>VARIANT COXPD6 GLU-338</scope>
    <scope>CHARACTERIZATION OF VARIANT COXPD6 GLU-338</scope>
</reference>
<reference key="38">
    <citation type="journal article" date="2017" name="Neurogenetics">
        <title>X-linked hypomyelination with spondylometaphyseal dysplasia (H-SMD) associated with mutations in AIFM1.</title>
        <authorList>
            <person name="Miyake N."/>
            <person name="Wolf N.I."/>
            <person name="Cayami F.K."/>
            <person name="Crawford J."/>
            <person name="Bley A."/>
            <person name="Bulas D."/>
            <person name="Conant A."/>
            <person name="Bent S.J."/>
            <person name="Gripp K.W."/>
            <person name="Hahn A."/>
            <person name="Humphray S."/>
            <person name="Kimura-Ohba S."/>
            <person name="Kingsbury Z."/>
            <person name="Lajoie B.R."/>
            <person name="Lal D."/>
            <person name="Micha D."/>
            <person name="Pizzino A."/>
            <person name="Sinke R.J."/>
            <person name="Sival D."/>
            <person name="Stolte-Dijkstra I."/>
            <person name="Superti-Furga A."/>
            <person name="Ulrick N."/>
            <person name="Taft R.J."/>
            <person name="Ogata T."/>
            <person name="Ozono K."/>
            <person name="Matsumoto N."/>
            <person name="Neubauer B.A."/>
            <person name="Simons C."/>
            <person name="Vanderver A."/>
        </authorList>
    </citation>
    <scope>VARIANTS SEMDHL HIS-235; GLY-237 AND VAL-237</scope>
    <scope>CHARACTERIZATION OF VARIANT SEMDHL HIS-235</scope>
    <scope>INVOLVEMENT IN SEMDHL</scope>
    <scope>TISSUE SPECIFICITY</scope>
</reference>
<comment type="function">
    <text evidence="2 9 11 13 17 22 24 27">Functions both as NADH oxidoreductase and as regulator of apoptosis (PubMed:17094969, PubMed:20362274, PubMed:23217327, PubMed:33168626). In response to apoptotic stimuli, it is released from the mitochondrion intermembrane space into the cytosol and to the nucleus, where it functions as a proapoptotic factor in a caspase-independent pathway (PubMed:20362274). Release into the cytoplasm is mediated upon binding to poly-ADP-ribose chains (By similarity). The soluble form (AIFsol) found in the nucleus induces 'parthanatos' i.e. caspase-independent fragmentation of chromosomal DNA (PubMed:20362274). Binds to DNA in a sequence-independent manner (PubMed:27178839). Interacts with EIF3G, and thereby inhibits the EIF3 machinery and protein synthesis, and activates caspase-7 to amplify apoptosis (PubMed:17094969). Plays a critical role in caspase-independent, pyknotic cell death in hydrogen peroxide-exposed cells (PubMed:19418225). In contrast, participates in normal mitochondrial metabolism. Plays an important role in the regulation of respiratory chain biogenesis by interacting with CHCHD4 and controlling CHCHD4 mitochondrial import (PubMed:26004228).</text>
</comment>
<comment type="function">
    <molecule>Isoform 4</molecule>
    <text evidence="8">Has NADH oxidoreductase activity. Does not induce nuclear apoptosis.</text>
</comment>
<comment type="function">
    <molecule>Isoform 5</molecule>
    <text evidence="7">Pro-apoptotic isoform.</text>
</comment>
<comment type="catalytic activity">
    <reaction evidence="17 18 24">
        <text>A + NADH + H(+) = AH2 + NAD(+)</text>
        <dbReference type="Rhea" id="RHEA:11356"/>
        <dbReference type="ChEBI" id="CHEBI:13193"/>
        <dbReference type="ChEBI" id="CHEBI:15378"/>
        <dbReference type="ChEBI" id="CHEBI:17499"/>
        <dbReference type="ChEBI" id="CHEBI:57540"/>
        <dbReference type="ChEBI" id="CHEBI:57945"/>
    </reaction>
</comment>
<comment type="catalytic activity">
    <molecule>Isoform 4</molecule>
    <reaction evidence="8">
        <text>A + NADH + H(+) = AH2 + NAD(+)</text>
        <dbReference type="Rhea" id="RHEA:11356"/>
        <dbReference type="ChEBI" id="CHEBI:13193"/>
        <dbReference type="ChEBI" id="CHEBI:15378"/>
        <dbReference type="ChEBI" id="CHEBI:17499"/>
        <dbReference type="ChEBI" id="CHEBI:57540"/>
        <dbReference type="ChEBI" id="CHEBI:57945"/>
    </reaction>
</comment>
<comment type="cofactor">
    <cofactor evidence="17 18 24 25">
        <name>FAD</name>
        <dbReference type="ChEBI" id="CHEBI:57692"/>
    </cofactor>
</comment>
<comment type="biophysicochemical properties">
    <kinetics>
        <KM evidence="17">1.53 mM for NADH</KM>
        <KM evidence="17 24">26 uM for cytochrome c (at pH 7.4 and 25 degrees Celsius)</KM>
        <KM evidence="24">138 uM for dichlorophenolindophenol (at pH 7.4 and 25 degrees Celsius)</KM>
        <KM evidence="24">0.51 mM for NADH (at pH 7.4 and 25 degrees Celsius)</KM>
        <KM evidence="18">896 uM for NADPH</KM>
        <text evidence="18 24">kcat is 86 min(-1) for dichlorophenolindophenol reduction and 24 min(-1) for cytochrome c reduction (PubMed:27178839). kcat is 1.5 sec(-1) for dichlorophenolindophenol reduction, 3.1 sec(-1) for ferricyanide and 0.6 sec(-1) for cytochrome c reduction (PubMed:24914854).</text>
    </kinetics>
</comment>
<comment type="biophysicochemical properties">
    <molecule>Isoform 4</molecule>
    <kinetics>
        <KM evidence="8">102.6 uM for NADH</KM>
        <KM evidence="8">45.3 uM for NADPH</KM>
    </kinetics>
</comment>
<comment type="subunit">
    <text evidence="9 10 12 14 17 18 22 25 27">Monomer (oxidized form). Homodimer (reduced form). Upon reduction with NADH, undergoes dimerization and forms tight, long-lived FADH2-NAD charge transfer complexes (CTC) resistant to oxidation (PubMed:20111043, PubMed:23217327, PubMed:24914854, PubMed:27818101). Also dimerizes with isoform 3 preventing its release from mitochondria (PubMed:20111043). Interacts with XIAP/BIRC4 (PubMed:17967870). Interacts (via N-terminus) with EIF3G (via C-terminus) (PubMed:17094969). Interacts with PRELID1 (PubMed:21364629). Interacts with CHCHD4; the interaction increases in presence of NADH (PubMed:26004228). Interacts with processed form of PARP1 (Poly [ADP-ribose] polymerase 1, processed C-terminus); interaction is mediated with poly-ADP-ribose chains attached to PARP1, promoting translocation into the nucleus (PubMed:33168626).</text>
</comment>
<comment type="interaction">
    <interactant intactId="EBI-356440">
        <id>O95831</id>
    </interactant>
    <interactant intactId="EBI-366632">
        <id>O75821</id>
        <label>EIF3G</label>
    </interactant>
    <organismsDiffer>false</organismsDiffer>
    <experiments>9</experiments>
</comment>
<comment type="interaction">
    <interactant intactId="EBI-356440">
        <id>O95831</id>
    </interactant>
    <interactant intactId="EBI-2556193">
        <id>Q63ZY3</id>
        <label>KANK2</label>
    </interactant>
    <organismsDiffer>false</organismsDiffer>
    <experiments>3</experiments>
</comment>
<comment type="interaction">
    <interactant intactId="EBI-356440">
        <id>O95831</id>
    </interactant>
    <interactant intactId="EBI-6244894">
        <id>Q63ZY3-2</id>
        <label>KANK2</label>
    </interactant>
    <organismsDiffer>false</organismsDiffer>
    <experiments>4</experiments>
</comment>
<comment type="interaction">
    <interactant intactId="EBI-356440">
        <id>O95831</id>
    </interactant>
    <interactant intactId="EBI-739485">
        <id>Q9Y3Q8</id>
        <label>TSC22D4</label>
    </interactant>
    <organismsDiffer>false</organismsDiffer>
    <experiments>2</experiments>
</comment>
<comment type="interaction">
    <interactant intactId="EBI-356440">
        <id>O95831</id>
    </interactant>
    <interactant intactId="EBI-25772799">
        <id>Q5EP34</id>
        <label>PA</label>
    </interactant>
    <organismsDiffer>true</organismsDiffer>
    <experiments>8</experiments>
</comment>
<comment type="subcellular location">
    <subcellularLocation>
        <location evidence="6 18 22">Mitochondrion intermembrane space</location>
    </subcellularLocation>
    <subcellularLocation>
        <location>Mitochondrion inner membrane</location>
    </subcellularLocation>
    <subcellularLocation>
        <location evidence="6 27">Cytoplasm</location>
    </subcellularLocation>
    <subcellularLocation>
        <location evidence="6 9 27">Nucleus</location>
    </subcellularLocation>
    <subcellularLocation>
        <location evidence="9">Cytoplasm</location>
        <location evidence="9">Perinuclear region</location>
    </subcellularLocation>
    <text evidence="2 6 9 27">Proteolytic cleavage during or just after translocation into the mitochondrial intermembrane space (IMS) results in the formation of an inner-membrane-anchored mature form (AIFmit). During apoptosis, further proteolytic processing leads to a mature form, which is confined to the mitochondrial IMS in a soluble form (AIFsol). AIFsol is released to the cytoplasm in response to specific death signals, and translocated to the nucleus, where it induces nuclear apoptosis (PubMed:15775970). Release into the cytoplasm is mediated upon binding to poly-ADP-ribose chains (By similarity). Translocation into the nucleus is promoted by interaction with (auto-poly-ADP-ribosylated) processed form of PARP1 (PubMed:33168626). Colocalizes with EIF3G in the nucleus and perinuclear region (PubMed:17094969).</text>
</comment>
<comment type="subcellular location">
    <molecule>Isoform 3</molecule>
    <subcellularLocation>
        <location evidence="12">Mitochondrion intermembrane space</location>
    </subcellularLocation>
    <subcellularLocation>
        <location evidence="12">Mitochondrion inner membrane</location>
    </subcellularLocation>
    <text evidence="12">Has a stronger membrane anchorage than isoform 1.</text>
</comment>
<comment type="subcellular location">
    <molecule>Isoform 4</molecule>
    <subcellularLocation>
        <location evidence="8">Mitochondrion</location>
    </subcellularLocation>
    <subcellularLocation>
        <location evidence="8">Cytoplasm</location>
        <location evidence="8">Cytosol</location>
    </subcellularLocation>
    <text evidence="8">In pro-apoptotic conditions, is released from mitochondria to cytosol in a calpain/cathepsin-dependent manner.</text>
</comment>
<comment type="subcellular location">
    <molecule>Isoform 5</molecule>
    <subcellularLocation>
        <location evidence="7">Cytoplasm</location>
    </subcellularLocation>
</comment>
<comment type="alternative products">
    <event type="alternative splicing"/>
    <isoform>
        <id>O95831-1</id>
        <name>1</name>
        <name>AIF</name>
        <sequence type="displayed"/>
    </isoform>
    <isoform>
        <id>O95831-2</id>
        <name>2</name>
        <sequence type="described" ref="VSP_004357"/>
    </isoform>
    <isoform>
        <id>O95831-3</id>
        <name>3</name>
        <name>AIF-exB</name>
        <name>AIF2</name>
        <sequence type="described" ref="VSP_022953"/>
    </isoform>
    <isoform>
        <id>O95831-4</id>
        <name>4</name>
        <name evidence="31">AIFsh2</name>
        <sequence type="described" ref="VSP_043637 VSP_043638"/>
    </isoform>
    <isoform>
        <id>O95831-5</id>
        <name>5</name>
        <name>AIFsh</name>
        <sequence type="described" ref="VSP_046248"/>
    </isoform>
    <isoform>
        <id>O95831-6</id>
        <name>6</name>
        <name evidence="31">AIFsh3</name>
        <sequence type="described" ref="VSP_060785 VSP_060786"/>
    </isoform>
</comment>
<comment type="tissue specificity">
    <text evidence="8 17 26">Expressed in all tested tissues (PubMed:16644725). Detected in muscle and skin fibroblasts (at protein level) (PubMed:23217327). Expressed in osteoblasts (at protein level) (PubMed:28842795).</text>
</comment>
<comment type="tissue specificity">
    <molecule>Isoform 3</molecule>
    <text evidence="12">Brain specific.</text>
</comment>
<comment type="tissue specificity">
    <molecule>Isoform 4</molecule>
    <text evidence="8">Expressed in all tested tissues except brain.</text>
</comment>
<comment type="tissue specificity">
    <molecule>Isoform 5</molecule>
    <text evidence="7">Isoform 5 is frequently down-regulated in human cancers.</text>
</comment>
<comment type="induction">
    <molecule>Isoform 5</molecule>
    <text evidence="7">Strongly down-regulated in many tumor cells, up-regulated by gamma-irradiation.</text>
</comment>
<comment type="PTM">
    <text evidence="6">Under normal conditions, a 54-residue N-terminal segment is first proteolytically removed during or just after translocation into the mitochondrial intermembrane space (IMS) by the mitochondrial processing peptidase (MPP) to form the inner-membrane-anchored mature form (AIFmit). During apoptosis, it is further proteolytically processed at amino-acid position 101 leading to the generation of the mature form, which is confined to the mitochondrial IMS in a soluble form (AIFsol). AIFsol is released to the cytoplasm in response to specific death signals, and translocated to the nucleus, where it induces nuclear apoptosis in a caspase-independent manner.</text>
</comment>
<comment type="PTM">
    <text evidence="10 16">Ubiquitination by XIAP/BIRC4 does not lead to proteasomal degradation. Ubiquitination at Lys-255 by XIAP/BIRC4 blocks its ability to bind DNA and induce chromatin degradation, thereby inhibiting its ability to induce cell death.</text>
</comment>
<comment type="disease" evidence="13 15 19 22 23 24">
    <disease id="DI-02854">
        <name>Combined oxidative phosphorylation deficiency 6</name>
        <acronym>COXPD6</acronym>
        <description>A mitochondrial disease resulting in a neurodegenerative disorder characterized by psychomotor delay, hypotonia, areflexia, muscle weakness and wasting. Some patients manifest prenatal ventriculomegaly and severe postnatal encephalomyopathy.</description>
        <dbReference type="MIM" id="300816"/>
    </disease>
    <text>The disease is caused by variants affecting the gene represented in this entry.</text>
</comment>
<comment type="disease" evidence="17 22">
    <disease id="DI-03693">
        <name>Charcot-Marie-Tooth disease, X-linked recessive, 4, with or without cerebellar ataxia</name>
        <acronym>CMTX4</acronym>
        <description>A neuromuscular disorder characterized by progressive sensorimotor axonal neuropathy, distal sensory impairment, difficulty walking due to peripheral neuropathy and/or cerebellar ataxia, and deafness due to auditory neuropathy. Additional features include cognitive impairment, cerebellar atrophy, dysarthria, abnormal extraocular movements, tremor, dysmetria and spasticity. The age at onset ranges from infancy to young adulthood.</description>
        <dbReference type="MIM" id="310490"/>
    </disease>
    <text>The disease is caused by variants affecting the gene represented in this entry.</text>
</comment>
<comment type="disease" evidence="21">
    <disease id="DI-04610">
        <name>Deafness, X-linked, 5, with peripheral neuropathy</name>
        <acronym>DFNX5</acronym>
        <description>A form of hearing loss characterized by absent or severely abnormal auditory brainstem response, abnormal middle ear reflexes, abnormal speech discrimination, loss of outer hair cell function, and cochlear nerve hypoplasia. DFNX5 patients manifest auditory neuropathy with childhood onset, associated with distal sensory impairment affecting the peripheral nervous system.</description>
        <dbReference type="MIM" id="300614"/>
    </disease>
    <text>The disease is caused by variants affecting the gene represented in this entry.</text>
</comment>
<comment type="disease" evidence="26">
    <disease id="DI-05710">
        <name>Spondyloepimetaphyseal dysplasia, X-linked, with hypomyelinating leukodystrophy</name>
        <acronym>SEMDHL</acronym>
        <description>An X-linked recessive developmental disorder characterized by slowly progressive skeletal and neurologic abnormalities, including short stature, large and deformed joints, significant motor impairment, visual defects, and sometimes cognitive deficits. Affected individuals typically have normal early development in the first year or so of life, followed by development regression and the development of symptoms. Brain imaging shows white matter abnormalities consistent with hypomyelinating leukodystrophy.</description>
        <dbReference type="MIM" id="300232"/>
    </disease>
    <text>The disease is caused by variants affecting the gene represented in this entry.</text>
</comment>
<comment type="miscellaneous">
    <molecule>Isoform 6</molecule>
    <text evidence="33">May be produced at very low levels due to a premature stop codon in the mRNA, leading to nonsense-mediated mRNA decay.</text>
</comment>
<comment type="similarity">
    <text evidence="33">Belongs to the FAD-dependent oxidoreductase family.</text>
</comment>
<comment type="sequence caution" evidence="33">
    <conflict type="erroneous translation">
        <sequence resource="EMBL-CDS" id="AAY84741"/>
    </conflict>
    <text>Wrong choice of CDS.</text>
</comment>
<comment type="online information" name="Atlas of Genetics and Cytogenetics in Oncology and Haematology">
    <link uri="https://atlasgeneticsoncology.org/gene/44053/AIFM1"/>
</comment>
<feature type="transit peptide" description="Mitochondrion" evidence="6 7 47">
    <location>
        <begin position="1"/>
        <end position="54"/>
    </location>
</feature>
<feature type="propeptide" id="PRO_0000401935" description="Removed in mature form" evidence="7">
    <location>
        <begin position="55"/>
        <end position="101"/>
    </location>
</feature>
<feature type="chain" id="PRO_0000022030" description="Apoptosis-inducing factor 1, mitochondrial">
    <location>
        <begin position="102"/>
        <end position="613"/>
    </location>
</feature>
<feature type="region of interest" description="Disordered" evidence="4">
    <location>
        <begin position="100"/>
        <end position="127"/>
    </location>
</feature>
<feature type="region of interest" description="FAD-dependent oxidoreductase" evidence="1">
    <location>
        <begin position="134"/>
        <end position="483"/>
    </location>
</feature>
<feature type="region of interest" description="Disordered" evidence="4">
    <location>
        <begin position="513"/>
        <end position="554"/>
    </location>
</feature>
<feature type="short sequence motif" description="Mitochondrial localization signal" evidence="2">
    <location>
        <begin position="1"/>
        <end position="31"/>
    </location>
</feature>
<feature type="short sequence motif" description="Mitochondrial localization signal" evidence="2">
    <location>
        <begin position="63"/>
        <end position="89"/>
    </location>
</feature>
<feature type="short sequence motif" description="Nuclear localization signal" evidence="3">
    <location>
        <begin position="446"/>
        <end position="451"/>
    </location>
</feature>
<feature type="compositionally biased region" description="Polar residues" evidence="4">
    <location>
        <begin position="513"/>
        <end position="529"/>
    </location>
</feature>
<feature type="binding site" evidence="5 17 18 24 25 35 36 38 39 40 42">
    <location>
        <begin position="138"/>
        <end position="142"/>
    </location>
    <ligand>
        <name>FAD</name>
        <dbReference type="ChEBI" id="CHEBI:57692"/>
    </ligand>
</feature>
<feature type="binding site" evidence="5 17 18 24 25 35 36 38 39 40 41 42">
    <location>
        <begin position="164"/>
        <end position="165"/>
    </location>
    <ligand>
        <name>FAD</name>
        <dbReference type="ChEBI" id="CHEBI:57692"/>
    </ligand>
</feature>
<feature type="binding site" evidence="5 17 18 24 25 35 36 38 39 40 41 42">
    <location>
        <position position="172"/>
    </location>
    <ligand>
        <name>FAD</name>
        <dbReference type="ChEBI" id="CHEBI:57692"/>
    </ligand>
</feature>
<feature type="binding site" evidence="5 18 24 25 35 36 38 39 40 42">
    <location>
        <position position="177"/>
    </location>
    <ligand>
        <name>FAD</name>
        <dbReference type="ChEBI" id="CHEBI:57692"/>
    </ligand>
</feature>
<feature type="binding site" evidence="18 35">
    <location>
        <position position="196"/>
    </location>
    <ligand>
        <name>NAD(+)</name>
        <dbReference type="ChEBI" id="CHEBI:57540"/>
        <label>2</label>
    </ligand>
</feature>
<feature type="binding site" evidence="5 17 18 24 25 35 36 38 39 40 41 42">
    <location>
        <position position="233"/>
    </location>
    <ligand>
        <name>FAD</name>
        <dbReference type="ChEBI" id="CHEBI:57692"/>
    </ligand>
</feature>
<feature type="binding site" evidence="5 17 18 24 25 35 36 38 39 40 41">
    <location>
        <position position="285"/>
    </location>
    <ligand>
        <name>FAD</name>
        <dbReference type="ChEBI" id="CHEBI:57692"/>
    </ligand>
</feature>
<feature type="binding site" evidence="18 35">
    <location>
        <begin position="308"/>
        <end position="311"/>
    </location>
    <ligand>
        <name>NAD(+)</name>
        <dbReference type="ChEBI" id="CHEBI:57540"/>
        <label>1</label>
    </ligand>
</feature>
<feature type="binding site" evidence="18 35">
    <location>
        <position position="336"/>
    </location>
    <ligand>
        <name>NAD(+)</name>
        <dbReference type="ChEBI" id="CHEBI:57540"/>
        <label>1</label>
    </ligand>
</feature>
<feature type="binding site" evidence="2">
    <location>
        <position position="342"/>
    </location>
    <ligand>
        <name>NAD(+)</name>
        <dbReference type="ChEBI" id="CHEBI:57540"/>
        <label>1</label>
    </ligand>
</feature>
<feature type="binding site" evidence="18 35">
    <location>
        <position position="399"/>
    </location>
    <ligand>
        <name>NAD(+)</name>
        <dbReference type="ChEBI" id="CHEBI:57540"/>
        <label>1</label>
    </ligand>
</feature>
<feature type="binding site" evidence="5 17 18 24 25 35 36 38 39 40 41 42">
    <location>
        <position position="438"/>
    </location>
    <ligand>
        <name>FAD</name>
        <dbReference type="ChEBI" id="CHEBI:57692"/>
    </ligand>
</feature>
<feature type="binding site" evidence="18 35">
    <location>
        <begin position="453"/>
        <end position="454"/>
    </location>
    <ligand>
        <name>NAD(+)</name>
        <dbReference type="ChEBI" id="CHEBI:57540"/>
        <label>1</label>
    </ligand>
</feature>
<feature type="binding site" evidence="5 18 24 25 35 36 38 39 40 41 42">
    <location>
        <begin position="454"/>
        <end position="455"/>
    </location>
    <ligand>
        <name>FAD</name>
        <dbReference type="ChEBI" id="CHEBI:57692"/>
    </ligand>
</feature>
<feature type="binding site" evidence="5 17 18 24 25 35 36 38 39 40 41 42">
    <location>
        <position position="483"/>
    </location>
    <ligand>
        <name>FAD</name>
        <dbReference type="ChEBI" id="CHEBI:57692"/>
    </ligand>
</feature>
<feature type="binding site" evidence="18 35 36">
    <location>
        <position position="483"/>
    </location>
    <ligand>
        <name>NAD(+)</name>
        <dbReference type="ChEBI" id="CHEBI:57540"/>
        <label>1</label>
    </ligand>
</feature>
<feature type="binding site" evidence="18 35">
    <location>
        <position position="493"/>
    </location>
    <ligand>
        <name>NAD(+)</name>
        <dbReference type="ChEBI" id="CHEBI:57540"/>
        <label>2</label>
    </ligand>
</feature>
<feature type="binding site" evidence="18 35">
    <location>
        <position position="583"/>
    </location>
    <ligand>
        <name>NAD(+)</name>
        <dbReference type="ChEBI" id="CHEBI:57540"/>
        <label>2</label>
    </ligand>
</feature>
<feature type="modified residue" description="Phosphothreonine" evidence="44 45">
    <location>
        <position position="105"/>
    </location>
</feature>
<feature type="modified residue" description="N6-succinyllysine" evidence="2">
    <location>
        <position position="109"/>
    </location>
</feature>
<feature type="modified residue" description="Phosphoserine" evidence="45 46">
    <location>
        <position position="116"/>
    </location>
</feature>
<feature type="modified residue" description="Phosphoserine" evidence="46">
    <location>
        <position position="118"/>
    </location>
</feature>
<feature type="modified residue" description="Phosphoserine" evidence="43 45 46">
    <location>
        <position position="268"/>
    </location>
</feature>
<feature type="modified residue" description="Phosphoserine" evidence="45">
    <location>
        <position position="292"/>
    </location>
</feature>
<feature type="modified residue" description="Phosphoserine" evidence="46">
    <location>
        <position position="371"/>
    </location>
</feature>
<feature type="modified residue" description="N6-acetyllysine" evidence="2">
    <location>
        <position position="388"/>
    </location>
</feature>
<feature type="modified residue" description="Phosphothreonine" evidence="46">
    <location>
        <position position="521"/>
    </location>
</feature>
<feature type="modified residue" description="Phosphoserine" evidence="46">
    <location>
        <position position="524"/>
    </location>
</feature>
<feature type="modified residue" description="Phosphoserine" evidence="46">
    <location>
        <position position="530"/>
    </location>
</feature>
<feature type="modified residue" description="N6-acetyllysine" evidence="2">
    <location>
        <position position="593"/>
    </location>
</feature>
<feature type="cross-link" description="Glycyl lysine isopeptide (Lys-Gly) (interchain with G-Cter in ubiquitin)" evidence="16">
    <location>
        <position position="255"/>
    </location>
</feature>
<feature type="splice variant" id="VSP_046248" description="In isoform 5." evidence="30">
    <location>
        <begin position="1"/>
        <end position="352"/>
    </location>
</feature>
<feature type="splice variant" id="VSP_004357" description="In isoform 2." evidence="32">
    <location>
        <begin position="36"/>
        <end position="322"/>
    </location>
</feature>
<feature type="splice variant" id="VSP_022953" description="In isoform 3." evidence="28 29 32">
    <original>GNLFQRWHVPLELQMTRQMASSGASGGKIDNSVLVLIVGLSTVGAGA</original>
    <variation>VVQSHHLGSPSRSLASTGASGKDGSNLVYFLIVGATVTGAGVY</variation>
    <location>
        <begin position="36"/>
        <end position="82"/>
    </location>
</feature>
<feature type="splice variant" id="VSP_060785" description="In isoform 6." evidence="33">
    <original>NLFQRWH</original>
    <variation>LQDYERG</variation>
    <location>
        <begin position="37"/>
        <end position="43"/>
    </location>
</feature>
<feature type="splice variant" id="VSP_060786" description="In isoform 6." evidence="33">
    <location>
        <begin position="44"/>
        <end position="613"/>
    </location>
</feature>
<feature type="splice variant" id="VSP_043637" description="In isoform 4." evidence="31">
    <original>AR</original>
    <variation>DI</variation>
    <location>
        <begin position="323"/>
        <end position="324"/>
    </location>
</feature>
<feature type="splice variant" id="VSP_043638" description="In isoform 4." evidence="31">
    <location>
        <begin position="325"/>
        <end position="613"/>
    </location>
</feature>
<feature type="sequence variant" id="VAR_063827" description="In COXPD6; higher DNA binding affinity, partially impaired flavin binding and association with increased parthanatos-linked cell death; dbSNP:rs387906500." evidence="13">
    <location>
        <position position="201"/>
    </location>
</feature>
<feature type="sequence variant" id="VAR_083739" description="In SEMDHL; severe decrease of protein expression; dbSNP:rs377527583." evidence="26">
    <original>Q</original>
    <variation>H</variation>
    <location>
        <position position="235"/>
    </location>
</feature>
<feature type="sequence variant" id="VAR_083740" description="In SEMDHL; dbSNP:rs1202786652." evidence="26">
    <original>D</original>
    <variation>G</variation>
    <location>
        <position position="237"/>
    </location>
</feature>
<feature type="sequence variant" id="VAR_083741" description="In SEMDHL; dbSNP:rs1202786652." evidence="26">
    <original>D</original>
    <variation>V</variation>
    <location>
        <position position="237"/>
    </location>
</feature>
<feature type="sequence variant" id="VAR_072791" description="In COXPD6; reduced protein amount in muscle compared to controls; no effect on reduction with NADH; strongly decreased NADH oxidase activity; no effect on dimerization; no effect on DNA-binding; dbSNP:rs1603225138." evidence="19 24">
    <original>V</original>
    <variation>L</variation>
    <location>
        <position position="243"/>
    </location>
</feature>
<feature type="sequence variant" id="VAR_076211" description="In DFNX5; dbSNP:rs863225432." evidence="21">
    <original>T</original>
    <variation>A</variation>
    <location>
        <position position="260"/>
    </location>
</feature>
<feature type="sequence variant" id="VAR_083067" description="Found in patient with mitochondrial encephalomyopathy with moderate clinical severity and slow progressive course despite early onset as well as and cerebellar involvement; likely pathogenic; decreased protein level; strongly decreased redox potential; strongly decreased NADH oxidase activity; no effect on DNA-binding; dbSNP:rs1603224817." evidence="20 24">
    <original>G</original>
    <variation>S</variation>
    <location>
        <position position="262"/>
    </location>
</feature>
<feature type="sequence variant" id="VAR_067334" description="In COXPD6; with prenatal ventriculomegaly and severe postnatal encephalomyopathy; no effect on redox potential; slowered reduction with NADH; strongly decreased NADH oxidase activity; strongly decreased NADH oxidase activity; no effect on DNA-binding; decreased interaction with CHCHDE; dbSNP:rs1603224226." evidence="15 22 24">
    <original>G</original>
    <variation>E</variation>
    <location>
        <position position="308"/>
    </location>
</feature>
<feature type="sequence variant" id="VAR_083068" description="In COXPD6; with early-onset severe motor neuron involvement; decreased protein levels; decreased oxidoreductase activity on cytochrome C; slowered reduction with NADH; strongly decreased NADH oxidase activity; strongly decreased NADH oxidase activity; no effect on DNA-binding; dbSNP:rs1603223152." evidence="23 24">
    <original>G</original>
    <variation>E</variation>
    <location>
        <position position="338"/>
    </location>
</feature>
<feature type="sequence variant" id="VAR_076212" description="In DFNX5; uncertain significance; dbSNP:rs184474885." evidence="21">
    <original>L</original>
    <variation>F</variation>
    <location>
        <position position="344"/>
    </location>
</feature>
<feature type="sequence variant" id="VAR_076213" description="In DFNX5; uncertain significance; dbSNP:rs724160026." evidence="21">
    <original>G</original>
    <variation>R</variation>
    <location>
        <position position="360"/>
    </location>
</feature>
<feature type="sequence variant" id="VAR_076214" description="In DFNX5; dbSNP:rs724160021." evidence="21">
    <original>R</original>
    <variation>Q</variation>
    <location>
        <position position="422"/>
    </location>
</feature>
<feature type="sequence variant" id="VAR_076215" description="In DFNX5; dbSNP:rs724160020." evidence="21">
    <original>R</original>
    <variation>W</variation>
    <location>
        <position position="422"/>
    </location>
</feature>
<feature type="sequence variant" id="VAR_076216" description="In DFNX5; uncertain significance; dbSNP:rs1223488720." evidence="21">
    <original>R</original>
    <variation>C</variation>
    <location>
        <position position="430"/>
    </location>
</feature>
<feature type="sequence variant" id="VAR_076217" description="In DFNX5; dbSNP:rs863225431." evidence="21">
    <original>R</original>
    <variation>Q</variation>
    <location>
        <position position="451"/>
    </location>
</feature>
<feature type="sequence variant" id="VAR_076218" description="In DFNX5; uncertain significance; dbSNP:rs2124648387." evidence="21">
    <original>A</original>
    <variation>V</variation>
    <location>
        <position position="472"/>
    </location>
</feature>
<feature type="sequence variant" id="VAR_076219" description="In DFNX5; uncertain significance; dbSNP:rs724160022." evidence="21">
    <original>P</original>
    <variation>L</variation>
    <location>
        <position position="475"/>
    </location>
</feature>
<feature type="sequence variant" id="VAR_069468" description="In CMTX4; increases affinity for NADH and electron transfer activity; increases affinity for DNA, resulting in increased apoptosis; no effect on interaction with CHCHD4; dbSNP:rs281864468." evidence="17 22">
    <original>E</original>
    <variation>V</variation>
    <location>
        <position position="493"/>
    </location>
</feature>
<feature type="sequence variant" id="VAR_076220" description="In DFNX5; uncertain significance; dbSNP:rs724160023." evidence="21">
    <original>V</original>
    <variation>M</variation>
    <location>
        <position position="498"/>
    </location>
</feature>
<feature type="sequence variant" id="VAR_076221" description="In DFNX5; uncertain significance." evidence="21">
    <original>I</original>
    <variation>M</variation>
    <location>
        <position position="591"/>
    </location>
</feature>
<feature type="mutagenesis site" description="Increases protein dimerization at lower NADH levels." evidence="25">
    <original>W</original>
    <variation>A</variation>
    <location>
        <position position="196"/>
    </location>
</feature>
<feature type="mutagenesis site" description="Disrupts dimerization. Lower efficiency in stabilizing charge-transfer complexes upon coenzyme reduction." evidence="18">
    <original>EIDSDFGGFRVNAELQAR</original>
    <variation>AIDSDFGGFAVNAELQAA</variation>
    <location>
        <begin position="413"/>
        <end position="430"/>
    </location>
</feature>
<feature type="mutagenesis site" description="Disrupts dimerization. Disrupts dimerization; when associated with A-477." evidence="25">
    <original>YDI</original>
    <variation>ADA</variation>
    <location>
        <begin position="443"/>
        <end position="445"/>
    </location>
</feature>
<feature type="mutagenesis site" description="Allows dimerization in absence of NADH." evidence="25">
    <original>H</original>
    <variation>A</variation>
    <location>
        <position position="454"/>
    </location>
</feature>
<feature type="mutagenesis site" description="Disrupts dimerization; when associated with A-443--445-A." evidence="25">
    <original>W</original>
    <variation>A</variation>
    <location>
        <position position="477"/>
    </location>
</feature>
<feature type="mutagenesis site" description="Allows dimerization in absence of NADH." evidence="25">
    <original>S</original>
    <variation>A</variation>
    <location>
        <position position="480"/>
    </location>
</feature>
<feature type="mutagenesis site" description="Increases protein dimerization at lower NADH levels." evidence="25">
    <original>D</original>
    <variation>A</variation>
    <location>
        <position position="485"/>
    </location>
</feature>
<feature type="mutagenesis site" description="Increases protein dimerization at lower NADH levels." evidence="25">
    <original>R</original>
    <variation>A</variation>
    <location>
        <position position="529"/>
    </location>
</feature>
<feature type="mutagenesis site" description="Increases protein dimerization at lower NADH levels." evidence="25">
    <original>E</original>
    <variation>A</variation>
    <location>
        <position position="531"/>
    </location>
</feature>
<feature type="mutagenesis site" description="Increases protein dimerization at lower NADH levels." evidence="25">
    <original>E</original>
    <variation>A</variation>
    <location>
        <position position="533"/>
    </location>
</feature>
<feature type="mutagenesis site" description="Increases protein dimerization at lower NADH levels." evidence="25">
    <original>E</original>
    <variation>A</variation>
    <location>
        <position position="535"/>
    </location>
</feature>
<feature type="strand" evidence="49">
    <location>
        <begin position="130"/>
        <end position="138"/>
    </location>
</feature>
<feature type="helix" evidence="49">
    <location>
        <begin position="141"/>
        <end position="153"/>
    </location>
</feature>
<feature type="strand" evidence="49">
    <location>
        <begin position="158"/>
        <end position="162"/>
    </location>
</feature>
<feature type="strand" evidence="49">
    <location>
        <begin position="164"/>
        <end position="167"/>
    </location>
</feature>
<feature type="helix" evidence="49">
    <location>
        <begin position="173"/>
        <end position="176"/>
    </location>
</feature>
<feature type="helix" evidence="49">
    <location>
        <begin position="178"/>
        <end position="180"/>
    </location>
</feature>
<feature type="helix" evidence="49">
    <location>
        <begin position="187"/>
        <end position="190"/>
    </location>
</feature>
<feature type="strand" evidence="49">
    <location>
        <begin position="192"/>
        <end position="194"/>
    </location>
</feature>
<feature type="strand" evidence="49">
    <location>
        <begin position="200"/>
        <end position="206"/>
    </location>
</feature>
<feature type="helix" evidence="49">
    <location>
        <begin position="208"/>
        <end position="210"/>
    </location>
</feature>
<feature type="turn" evidence="49">
    <location>
        <begin position="214"/>
        <end position="219"/>
    </location>
</feature>
<feature type="strand" evidence="49">
    <location>
        <begin position="224"/>
        <end position="228"/>
    </location>
</feature>
<feature type="strand" evidence="49">
    <location>
        <begin position="233"/>
        <end position="237"/>
    </location>
</feature>
<feature type="turn" evidence="49">
    <location>
        <begin position="238"/>
        <end position="241"/>
    </location>
</feature>
<feature type="strand" evidence="49">
    <location>
        <begin position="242"/>
        <end position="245"/>
    </location>
</feature>
<feature type="strand" evidence="49">
    <location>
        <begin position="250"/>
        <end position="258"/>
    </location>
</feature>
<feature type="strand" evidence="49">
    <location>
        <begin position="262"/>
        <end position="264"/>
    </location>
</feature>
<feature type="helix" evidence="49">
    <location>
        <begin position="268"/>
        <end position="271"/>
    </location>
</feature>
<feature type="helix" evidence="49">
    <location>
        <begin position="275"/>
        <end position="279"/>
    </location>
</feature>
<feature type="strand" evidence="49">
    <location>
        <begin position="281"/>
        <end position="283"/>
    </location>
</feature>
<feature type="helix" evidence="49">
    <location>
        <begin position="287"/>
        <end position="299"/>
    </location>
</feature>
<feature type="strand" evidence="49">
    <location>
        <begin position="301"/>
        <end position="306"/>
    </location>
</feature>
<feature type="helix" evidence="49">
    <location>
        <begin position="310"/>
        <end position="326"/>
    </location>
</feature>
<feature type="strand" evidence="49">
    <location>
        <begin position="329"/>
        <end position="333"/>
    </location>
</feature>
<feature type="strand" evidence="49">
    <location>
        <begin position="335"/>
        <end position="338"/>
    </location>
</feature>
<feature type="turn" evidence="49">
    <location>
        <begin position="339"/>
        <end position="343"/>
    </location>
</feature>
<feature type="helix" evidence="49">
    <location>
        <begin position="346"/>
        <end position="358"/>
    </location>
</feature>
<feature type="strand" evidence="49">
    <location>
        <begin position="362"/>
        <end position="364"/>
    </location>
</feature>
<feature type="strand" evidence="49">
    <location>
        <begin position="369"/>
        <end position="375"/>
    </location>
</feature>
<feature type="strand" evidence="49">
    <location>
        <begin position="378"/>
        <end position="383"/>
    </location>
</feature>
<feature type="strand" evidence="49">
    <location>
        <begin position="388"/>
        <end position="396"/>
    </location>
</feature>
<feature type="strand" evidence="49">
    <location>
        <begin position="400"/>
        <end position="402"/>
    </location>
</feature>
<feature type="helix" evidence="49">
    <location>
        <begin position="407"/>
        <end position="410"/>
    </location>
</feature>
<feature type="turn" evidence="49">
    <location>
        <begin position="416"/>
        <end position="418"/>
    </location>
</feature>
<feature type="strand" evidence="49">
    <location>
        <begin position="420"/>
        <end position="422"/>
    </location>
</feature>
<feature type="strand" evidence="49">
    <location>
        <begin position="427"/>
        <end position="430"/>
    </location>
</feature>
<feature type="strand" evidence="49">
    <location>
        <begin position="433"/>
        <end position="435"/>
    </location>
</feature>
<feature type="helix" evidence="49">
    <location>
        <begin position="437"/>
        <end position="439"/>
    </location>
</feature>
<feature type="strand" evidence="49">
    <location>
        <begin position="440"/>
        <end position="444"/>
    </location>
</feature>
<feature type="turn" evidence="49">
    <location>
        <begin position="445"/>
        <end position="447"/>
    </location>
</feature>
<feature type="strand" evidence="49">
    <location>
        <begin position="448"/>
        <end position="450"/>
    </location>
</feature>
<feature type="helix" evidence="49">
    <location>
        <begin position="455"/>
        <end position="468"/>
    </location>
</feature>
<feature type="turn" evidence="49">
    <location>
        <begin position="469"/>
        <end position="471"/>
    </location>
</feature>
<feature type="strand" evidence="49">
    <location>
        <begin position="481"/>
        <end position="487"/>
    </location>
</feature>
<feature type="strand" evidence="49">
    <location>
        <begin position="491"/>
        <end position="496"/>
    </location>
</feature>
<feature type="strand" evidence="49">
    <location>
        <begin position="504"/>
        <end position="509"/>
    </location>
</feature>
<feature type="strand" evidence="48">
    <location>
        <begin position="513"/>
        <end position="515"/>
    </location>
</feature>
<feature type="helix" evidence="49">
    <location>
        <begin position="517"/>
        <end position="524"/>
    </location>
</feature>
<feature type="helix" evidence="49">
    <location>
        <begin position="529"/>
        <end position="533"/>
    </location>
</feature>
<feature type="strand" evidence="50">
    <location>
        <begin position="538"/>
        <end position="542"/>
    </location>
</feature>
<feature type="strand" evidence="49">
    <location>
        <begin position="562"/>
        <end position="569"/>
    </location>
</feature>
<feature type="strand" evidence="49">
    <location>
        <begin position="572"/>
        <end position="580"/>
    </location>
</feature>
<feature type="helix" evidence="49">
    <location>
        <begin position="585"/>
        <end position="594"/>
    </location>
</feature>
<feature type="helix" evidence="49">
    <location>
        <begin position="601"/>
        <end position="605"/>
    </location>
</feature>
<feature type="helix" evidence="49">
    <location>
        <begin position="606"/>
        <end position="608"/>
    </location>
</feature>
<sequence length="613" mass="66901">MFRCGGLAAGALKQKLVPLVRTVCVRSPRQRNRLPGNLFQRWHVPLELQMTRQMASSGASGGKIDNSVLVLIVGLSTVGAGAYAYKTMKEDEKRYNERISGLGLTPEQKQKKAALSASEGEEVPQDKAPSHVPFLLIGGGTAAFAAARSIRARDPGARVLIVSEDPELPYMRPPLSKELWFSDDPNVTKTLRFKQWNGKERSIYFQPPSFYVSAQDLPHIENGGVAVLTGKKVVQLDVRDNMVKLNDGSQITYEKCLIATGGTPRSLSAIDRAGAEVKSRTTLFRKIGDFRSLEKISREVKSITIIGGGFLGSELACALGRKARALGTEVIQLFPEKGNMGKILPEYLSNWTMEKVRREGVKVMPNAIVQSVGVSSGKLLIKLKDGRKVETDHIVAAVGLEPNVELAKTGGLEIDSDFGGFRVNAELQARSNIWVAGDAACFYDIKLGRRRVEHHDHAVVSGRLAGENMTGAAKPYWHQSMFWSDLGPDVGYEAIGLVDSSLPTVGVFAKATAQDNPKSATEQSGTGIRSESETESEASEITIPPSTPAVPQAPVQGEDYGKGVIFYLRDKVVVGIVLWNIFNRMPIARKIIKDGEQHEDLNEVAKLFNIHED</sequence>
<dbReference type="EC" id="1.6.99.-" evidence="17 18 24"/>
<dbReference type="EMBL" id="AF100928">
    <property type="protein sequence ID" value="AAD16436.1"/>
    <property type="molecule type" value="mRNA"/>
</dbReference>
<dbReference type="EMBL" id="DQ016496">
    <property type="protein sequence ID" value="AAY84737.1"/>
    <property type="molecule type" value="mRNA"/>
</dbReference>
<dbReference type="EMBL" id="DQ016498">
    <property type="protein sequence ID" value="AAY84739.1"/>
    <property type="molecule type" value="mRNA"/>
</dbReference>
<dbReference type="EMBL" id="DQ016500">
    <property type="protein sequence ID" value="AAY84741.1"/>
    <property type="status" value="ALT_SEQ"/>
    <property type="molecule type" value="mRNA"/>
</dbReference>
<dbReference type="EMBL" id="AL049703">
    <property type="protein sequence ID" value="CAB41267.1"/>
    <property type="molecule type" value="mRNA"/>
</dbReference>
<dbReference type="EMBL" id="AL049704">
    <property type="protein sequence ID" value="CAB41268.1"/>
    <property type="molecule type" value="mRNA"/>
</dbReference>
<dbReference type="EMBL" id="AK314446">
    <property type="protein sequence ID" value="BAG37055.1"/>
    <property type="molecule type" value="mRNA"/>
</dbReference>
<dbReference type="EMBL" id="CR457379">
    <property type="protein sequence ID" value="CAG33660.1"/>
    <property type="molecule type" value="mRNA"/>
</dbReference>
<dbReference type="EMBL" id="AL139234">
    <property type="status" value="NOT_ANNOTATED_CDS"/>
    <property type="molecule type" value="Genomic_DNA"/>
</dbReference>
<dbReference type="EMBL" id="KF459397">
    <property type="status" value="NOT_ANNOTATED_CDS"/>
    <property type="molecule type" value="Genomic_DNA"/>
</dbReference>
<dbReference type="EMBL" id="KF510638">
    <property type="status" value="NOT_ANNOTATED_CDS"/>
    <property type="molecule type" value="Genomic_DNA"/>
</dbReference>
<dbReference type="EMBL" id="CH471107">
    <property type="protein sequence ID" value="EAX11811.1"/>
    <property type="molecule type" value="Genomic_DNA"/>
</dbReference>
<dbReference type="EMBL" id="CH471107">
    <property type="protein sequence ID" value="EAX11812.1"/>
    <property type="molecule type" value="Genomic_DNA"/>
</dbReference>
<dbReference type="EMBL" id="CH471107">
    <property type="protein sequence ID" value="EAX11810.1"/>
    <property type="molecule type" value="Genomic_DNA"/>
</dbReference>
<dbReference type="EMBL" id="BC111065">
    <property type="protein sequence ID" value="AAI11066.1"/>
    <property type="molecule type" value="mRNA"/>
</dbReference>
<dbReference type="EMBL" id="BC139738">
    <property type="protein sequence ID" value="AAI39739.1"/>
    <property type="molecule type" value="mRNA"/>
</dbReference>
<dbReference type="EMBL" id="AF131759">
    <property type="protein sequence ID" value="AAD20036.1"/>
    <property type="molecule type" value="mRNA"/>
</dbReference>
<dbReference type="CCDS" id="CCDS14618.1">
    <molecule id="O95831-1"/>
</dbReference>
<dbReference type="CCDS" id="CCDS14619.1">
    <molecule id="O95831-3"/>
</dbReference>
<dbReference type="CCDS" id="CCDS48167.1">
    <molecule id="O95831-4"/>
</dbReference>
<dbReference type="RefSeq" id="NP_001124318.2">
    <property type="nucleotide sequence ID" value="NM_001130846.3"/>
</dbReference>
<dbReference type="RefSeq" id="NP_001124319.1">
    <molecule id="O95831-4"/>
    <property type="nucleotide sequence ID" value="NM_001130847.4"/>
</dbReference>
<dbReference type="RefSeq" id="NP_004199.1">
    <molecule id="O95831-1"/>
    <property type="nucleotide sequence ID" value="NM_004208.4"/>
</dbReference>
<dbReference type="RefSeq" id="NP_665811.1">
    <molecule id="O95831-3"/>
    <property type="nucleotide sequence ID" value="NM_145812.3"/>
</dbReference>
<dbReference type="PDB" id="1M6I">
    <property type="method" value="X-ray"/>
    <property type="resolution" value="1.80 A"/>
    <property type="chains" value="A=121-613"/>
</dbReference>
<dbReference type="PDB" id="4BUR">
    <property type="method" value="X-ray"/>
    <property type="resolution" value="2.88 A"/>
    <property type="chains" value="A/B/C/D=103-613"/>
</dbReference>
<dbReference type="PDB" id="4BV6">
    <property type="method" value="X-ray"/>
    <property type="resolution" value="1.80 A"/>
    <property type="chains" value="A=121-613"/>
</dbReference>
<dbReference type="PDB" id="4FDC">
    <property type="method" value="X-ray"/>
    <property type="resolution" value="2.40 A"/>
    <property type="chains" value="B=103-613"/>
</dbReference>
<dbReference type="PDB" id="4LII">
    <property type="method" value="X-ray"/>
    <property type="resolution" value="1.88 A"/>
    <property type="chains" value="A=100-611"/>
</dbReference>
<dbReference type="PDB" id="5FMH">
    <property type="method" value="X-ray"/>
    <property type="resolution" value="1.80 A"/>
    <property type="chains" value="A=104-613"/>
</dbReference>
<dbReference type="PDB" id="5FS6">
    <property type="method" value="X-ray"/>
    <property type="resolution" value="1.90 A"/>
    <property type="chains" value="A/B=103-613"/>
</dbReference>
<dbReference type="PDB" id="5FS7">
    <property type="method" value="X-ray"/>
    <property type="resolution" value="1.85 A"/>
    <property type="chains" value="A/B=103-613"/>
</dbReference>
<dbReference type="PDB" id="5FS8">
    <property type="method" value="X-ray"/>
    <property type="resolution" value="1.40 A"/>
    <property type="chains" value="A=103-613"/>
</dbReference>
<dbReference type="PDB" id="5FS9">
    <property type="method" value="X-ray"/>
    <property type="resolution" value="1.75 A"/>
    <property type="chains" value="A/B=103-613"/>
</dbReference>
<dbReference type="PDB" id="5KVH">
    <property type="method" value="X-ray"/>
    <property type="resolution" value="2.27 A"/>
    <property type="chains" value="A/B=78-613"/>
</dbReference>
<dbReference type="PDB" id="5KVI">
    <property type="method" value="X-ray"/>
    <property type="resolution" value="2.00 A"/>
    <property type="chains" value="A=78-613"/>
</dbReference>
<dbReference type="PDB" id="8D3E">
    <property type="method" value="X-ray"/>
    <property type="resolution" value="2.38 A"/>
    <property type="chains" value="A/B=78-613"/>
</dbReference>
<dbReference type="PDB" id="8D3G">
    <property type="method" value="X-ray"/>
    <property type="resolution" value="2.58 A"/>
    <property type="chains" value="A/B=78-613"/>
</dbReference>
<dbReference type="PDB" id="8D3H">
    <property type="method" value="X-ray"/>
    <property type="resolution" value="2.51 A"/>
    <property type="chains" value="A/B=78-613"/>
</dbReference>
<dbReference type="PDB" id="8D3I">
    <property type="method" value="X-ray"/>
    <property type="resolution" value="2.65 A"/>
    <property type="chains" value="A/B=78-613"/>
</dbReference>
<dbReference type="PDB" id="8D3J">
    <property type="method" value="X-ray"/>
    <property type="resolution" value="2.40 A"/>
    <property type="chains" value="A/B=78-613"/>
</dbReference>
<dbReference type="PDB" id="8D3K">
    <property type="method" value="X-ray"/>
    <property type="resolution" value="2.30 A"/>
    <property type="chains" value="A/B=78-613"/>
</dbReference>
<dbReference type="PDB" id="8D3N">
    <property type="method" value="X-ray"/>
    <property type="resolution" value="2.25 A"/>
    <property type="chains" value="A/B=78-613"/>
</dbReference>
<dbReference type="PDB" id="8D3O">
    <property type="method" value="X-ray"/>
    <property type="resolution" value="2.25 A"/>
    <property type="chains" value="A/B=78-613"/>
</dbReference>
<dbReference type="PDB" id="8VGY">
    <property type="method" value="X-ray"/>
    <property type="resolution" value="2.30 A"/>
    <property type="chains" value="A/C=104-613"/>
</dbReference>
<dbReference type="PDBsum" id="1M6I"/>
<dbReference type="PDBsum" id="4BUR"/>
<dbReference type="PDBsum" id="4BV6"/>
<dbReference type="PDBsum" id="4FDC"/>
<dbReference type="PDBsum" id="4LII"/>
<dbReference type="PDBsum" id="5FMH"/>
<dbReference type="PDBsum" id="5FS6"/>
<dbReference type="PDBsum" id="5FS7"/>
<dbReference type="PDBsum" id="5FS8"/>
<dbReference type="PDBsum" id="5FS9"/>
<dbReference type="PDBsum" id="5KVH"/>
<dbReference type="PDBsum" id="5KVI"/>
<dbReference type="PDBsum" id="8D3E"/>
<dbReference type="PDBsum" id="8D3G"/>
<dbReference type="PDBsum" id="8D3H"/>
<dbReference type="PDBsum" id="8D3I"/>
<dbReference type="PDBsum" id="8D3J"/>
<dbReference type="PDBsum" id="8D3K"/>
<dbReference type="PDBsum" id="8D3N"/>
<dbReference type="PDBsum" id="8D3O"/>
<dbReference type="PDBsum" id="8VGY"/>
<dbReference type="SASBDB" id="O95831"/>
<dbReference type="SMR" id="O95831"/>
<dbReference type="BioGRID" id="114579">
    <property type="interactions" value="651"/>
</dbReference>
<dbReference type="CORUM" id="O95831"/>
<dbReference type="DIP" id="DIP-32975N"/>
<dbReference type="FunCoup" id="O95831">
    <property type="interactions" value="3078"/>
</dbReference>
<dbReference type="IntAct" id="O95831">
    <property type="interactions" value="374"/>
</dbReference>
<dbReference type="MINT" id="O95831"/>
<dbReference type="STRING" id="9606.ENSP00000287295"/>
<dbReference type="ChEMBL" id="CHEMBL4295688"/>
<dbReference type="DrugBank" id="DB03147">
    <property type="generic name" value="Flavin adenine dinucleotide"/>
</dbReference>
<dbReference type="DrugBank" id="DB05282">
    <property type="generic name" value="MCC"/>
</dbReference>
<dbReference type="CarbonylDB" id="O95831"/>
<dbReference type="GlyCosmos" id="O95831">
    <property type="glycosylation" value="1 site, 1 glycan"/>
</dbReference>
<dbReference type="GlyGen" id="O95831">
    <property type="glycosylation" value="2 sites, 1 O-linked glycan (1 site)"/>
</dbReference>
<dbReference type="iPTMnet" id="O95831"/>
<dbReference type="MetOSite" id="O95831"/>
<dbReference type="PhosphoSitePlus" id="O95831"/>
<dbReference type="SwissPalm" id="O95831"/>
<dbReference type="BioMuta" id="AIFM1"/>
<dbReference type="REPRODUCTION-2DPAGE" id="IPI00157908"/>
<dbReference type="jPOST" id="O95831"/>
<dbReference type="MassIVE" id="O95831"/>
<dbReference type="PaxDb" id="9606-ENSP00000287295"/>
<dbReference type="PeptideAtlas" id="O95831"/>
<dbReference type="ProteomicsDB" id="51073">
    <molecule id="O95831-1"/>
</dbReference>
<dbReference type="ProteomicsDB" id="51074">
    <molecule id="O95831-2"/>
</dbReference>
<dbReference type="ProteomicsDB" id="51075">
    <molecule id="O95831-3"/>
</dbReference>
<dbReference type="ProteomicsDB" id="51076">
    <molecule id="O95831-4"/>
</dbReference>
<dbReference type="ProteomicsDB" id="61222"/>
<dbReference type="ProteomicsDB" id="61439"/>
<dbReference type="Pumba" id="O95831"/>
<dbReference type="Antibodypedia" id="3528">
    <property type="antibodies" value="849 antibodies from 46 providers"/>
</dbReference>
<dbReference type="DNASU" id="9131"/>
<dbReference type="Ensembl" id="ENST00000287295.8">
    <molecule id="O95831-1"/>
    <property type="protein sequence ID" value="ENSP00000287295.3"/>
    <property type="gene ID" value="ENSG00000156709.15"/>
</dbReference>
<dbReference type="Ensembl" id="ENST00000346424.6">
    <molecule id="O95831-2"/>
    <property type="protein sequence ID" value="ENSP00000316320.3"/>
    <property type="gene ID" value="ENSG00000156709.15"/>
</dbReference>
<dbReference type="Ensembl" id="ENST00000527892.5">
    <molecule id="O95831-6"/>
    <property type="protein sequence ID" value="ENSP00000435955.1"/>
    <property type="gene ID" value="ENSG00000156709.15"/>
</dbReference>
<dbReference type="Ensembl" id="ENST00000535724.6">
    <molecule id="O95831-4"/>
    <property type="protein sequence ID" value="ENSP00000446113.2"/>
    <property type="gene ID" value="ENSG00000156709.15"/>
</dbReference>
<dbReference type="Ensembl" id="ENST00000674997.1">
    <molecule id="O95831-6"/>
    <property type="protein sequence ID" value="ENSP00000502124.1"/>
    <property type="gene ID" value="ENSG00000156709.15"/>
</dbReference>
<dbReference type="Ensembl" id="ENST00000675050.1">
    <molecule id="O95831-3"/>
    <property type="protein sequence ID" value="ENSP00000502606.1"/>
    <property type="gene ID" value="ENSG00000156709.15"/>
</dbReference>
<dbReference type="Ensembl" id="ENST00000675774.1">
    <molecule id="O95831-6"/>
    <property type="protein sequence ID" value="ENSP00000502690.1"/>
    <property type="gene ID" value="ENSG00000156709.15"/>
</dbReference>
<dbReference type="Ensembl" id="ENST00000676229.1">
    <molecule id="O95831-3"/>
    <property type="protein sequence ID" value="ENSP00000502184.1"/>
    <property type="gene ID" value="ENSG00000156709.15"/>
</dbReference>
<dbReference type="GeneID" id="9131"/>
<dbReference type="KEGG" id="hsa:9131"/>
<dbReference type="MANE-Select" id="ENST00000287295.8">
    <property type="protein sequence ID" value="ENSP00000287295.3"/>
    <property type="RefSeq nucleotide sequence ID" value="NM_004208.4"/>
    <property type="RefSeq protein sequence ID" value="NP_004199.1"/>
</dbReference>
<dbReference type="UCSC" id="uc004evg.4">
    <molecule id="O95831-1"/>
    <property type="organism name" value="human"/>
</dbReference>
<dbReference type="UCSC" id="uc065bbv.1">
    <property type="organism name" value="human"/>
</dbReference>
<dbReference type="AGR" id="HGNC:8768"/>
<dbReference type="CTD" id="9131"/>
<dbReference type="DisGeNET" id="9131"/>
<dbReference type="GeneCards" id="AIFM1"/>
<dbReference type="GeneReviews" id="AIFM1"/>
<dbReference type="HGNC" id="HGNC:8768">
    <property type="gene designation" value="AIFM1"/>
</dbReference>
<dbReference type="HPA" id="ENSG00000156709">
    <property type="expression patterns" value="Low tissue specificity"/>
</dbReference>
<dbReference type="MalaCards" id="AIFM1"/>
<dbReference type="MIM" id="300169">
    <property type="type" value="gene"/>
</dbReference>
<dbReference type="MIM" id="300232">
    <property type="type" value="phenotype"/>
</dbReference>
<dbReference type="MIM" id="300614">
    <property type="type" value="phenotype"/>
</dbReference>
<dbReference type="MIM" id="300816">
    <property type="type" value="phenotype"/>
</dbReference>
<dbReference type="MIM" id="310490">
    <property type="type" value="phenotype"/>
</dbReference>
<dbReference type="neXtProt" id="NX_O95831"/>
<dbReference type="OpenTargets" id="ENSG00000156709"/>
<dbReference type="Orphanet" id="83629">
    <property type="disease" value="Leukoencephalopathy-spondyloepimetaphyseal dysplasia syndrome"/>
</dbReference>
<dbReference type="Orphanet" id="238329">
    <property type="disease" value="Severe X-linked mitochondrial encephalomyopathy"/>
</dbReference>
<dbReference type="Orphanet" id="101078">
    <property type="disease" value="X-linked Charcot-Marie-Tooth disease type 4"/>
</dbReference>
<dbReference type="Orphanet" id="139583">
    <property type="disease" value="X-linked hereditary sensory and autonomic neuropathy with deafness"/>
</dbReference>
<dbReference type="PharmGKB" id="PA162376129"/>
<dbReference type="VEuPathDB" id="HostDB:ENSG00000156709"/>
<dbReference type="eggNOG" id="KOG1346">
    <property type="taxonomic scope" value="Eukaryota"/>
</dbReference>
<dbReference type="GeneTree" id="ENSGT00940000156455"/>
<dbReference type="HOGENOM" id="CLU_1059750_0_0_1"/>
<dbReference type="InParanoid" id="O95831"/>
<dbReference type="OMA" id="RSIFFEH"/>
<dbReference type="OrthoDB" id="6029at2759"/>
<dbReference type="PAN-GO" id="O95831">
    <property type="GO annotations" value="6 GO annotations based on evolutionary models"/>
</dbReference>
<dbReference type="PhylomeDB" id="O95831"/>
<dbReference type="TreeFam" id="TF314028"/>
<dbReference type="BioCyc" id="MetaCyc:ENSG00000156709-MONOMER"/>
<dbReference type="BRENDA" id="7.1.1.2">
    <property type="organism ID" value="2681"/>
</dbReference>
<dbReference type="PathwayCommons" id="O95831"/>
<dbReference type="SABIO-RK" id="O95831"/>
<dbReference type="SignaLink" id="O95831"/>
<dbReference type="SIGNOR" id="O95831"/>
<dbReference type="BioGRID-ORCS" id="9131">
    <property type="hits" value="181 hits in 796 CRISPR screens"/>
</dbReference>
<dbReference type="ChiTaRS" id="AIFM1">
    <property type="organism name" value="human"/>
</dbReference>
<dbReference type="EvolutionaryTrace" id="O95831"/>
<dbReference type="GeneWiki" id="AIFM1"/>
<dbReference type="GenomeRNAi" id="9131"/>
<dbReference type="Pharos" id="O95831">
    <property type="development level" value="Tbio"/>
</dbReference>
<dbReference type="PRO" id="PR:O95831"/>
<dbReference type="Proteomes" id="UP000005640">
    <property type="component" value="Chromosome X"/>
</dbReference>
<dbReference type="RNAct" id="O95831">
    <property type="molecule type" value="protein"/>
</dbReference>
<dbReference type="Bgee" id="ENSG00000156709">
    <property type="expression patterns" value="Expressed in apex of heart and 183 other cell types or tissues"/>
</dbReference>
<dbReference type="ExpressionAtlas" id="O95831">
    <property type="expression patterns" value="baseline and differential"/>
</dbReference>
<dbReference type="GO" id="GO:0005737">
    <property type="term" value="C:cytoplasm"/>
    <property type="evidence" value="ECO:0000318"/>
    <property type="project" value="GO_Central"/>
</dbReference>
<dbReference type="GO" id="GO:0005829">
    <property type="term" value="C:cytosol"/>
    <property type="evidence" value="ECO:0000250"/>
    <property type="project" value="UniProtKB"/>
</dbReference>
<dbReference type="GO" id="GO:0005743">
    <property type="term" value="C:mitochondrial inner membrane"/>
    <property type="evidence" value="ECO:0000304"/>
    <property type="project" value="UniProtKB"/>
</dbReference>
<dbReference type="GO" id="GO:0005758">
    <property type="term" value="C:mitochondrial intermembrane space"/>
    <property type="evidence" value="ECO:0000314"/>
    <property type="project" value="UniProtKB"/>
</dbReference>
<dbReference type="GO" id="GO:0005739">
    <property type="term" value="C:mitochondrion"/>
    <property type="evidence" value="ECO:0000314"/>
    <property type="project" value="HPA"/>
</dbReference>
<dbReference type="GO" id="GO:0005634">
    <property type="term" value="C:nucleus"/>
    <property type="evidence" value="ECO:0000314"/>
    <property type="project" value="UniProtKB"/>
</dbReference>
<dbReference type="GO" id="GO:0048471">
    <property type="term" value="C:perinuclear region of cytoplasm"/>
    <property type="evidence" value="ECO:0007669"/>
    <property type="project" value="UniProtKB-SubCell"/>
</dbReference>
<dbReference type="GO" id="GO:0003677">
    <property type="term" value="F:DNA binding"/>
    <property type="evidence" value="ECO:0000314"/>
    <property type="project" value="UniProtKB"/>
</dbReference>
<dbReference type="GO" id="GO:0071949">
    <property type="term" value="F:FAD binding"/>
    <property type="evidence" value="ECO:0000314"/>
    <property type="project" value="UniProtKB"/>
</dbReference>
<dbReference type="GO" id="GO:0016174">
    <property type="term" value="F:NAD(P)H oxidase H2O2-forming activity"/>
    <property type="evidence" value="ECO:0000314"/>
    <property type="project" value="UniProtKB"/>
</dbReference>
<dbReference type="GO" id="GO:0003954">
    <property type="term" value="F:NADH dehydrogenase activity"/>
    <property type="evidence" value="ECO:0007669"/>
    <property type="project" value="RHEA"/>
</dbReference>
<dbReference type="GO" id="GO:0016651">
    <property type="term" value="F:oxidoreductase activity, acting on NAD(P)H"/>
    <property type="evidence" value="ECO:0000314"/>
    <property type="project" value="UniProtKB"/>
</dbReference>
<dbReference type="GO" id="GO:0072572">
    <property type="term" value="F:poly-ADP-D-ribose binding"/>
    <property type="evidence" value="ECO:0000250"/>
    <property type="project" value="UniProtKB"/>
</dbReference>
<dbReference type="GO" id="GO:0046983">
    <property type="term" value="F:protein dimerization activity"/>
    <property type="evidence" value="ECO:0007669"/>
    <property type="project" value="InterPro"/>
</dbReference>
<dbReference type="GO" id="GO:0006915">
    <property type="term" value="P:apoptotic process"/>
    <property type="evidence" value="ECO:0000315"/>
    <property type="project" value="UniProtKB"/>
</dbReference>
<dbReference type="GO" id="GO:1904045">
    <property type="term" value="P:cellular response to aldosterone"/>
    <property type="evidence" value="ECO:0007669"/>
    <property type="project" value="Ensembl"/>
</dbReference>
<dbReference type="GO" id="GO:0071392">
    <property type="term" value="P:cellular response to estradiol stimulus"/>
    <property type="evidence" value="ECO:0007669"/>
    <property type="project" value="Ensembl"/>
</dbReference>
<dbReference type="GO" id="GO:0070301">
    <property type="term" value="P:cellular response to hydrogen peroxide"/>
    <property type="evidence" value="ECO:0007669"/>
    <property type="project" value="Ensembl"/>
</dbReference>
<dbReference type="GO" id="GO:0071456">
    <property type="term" value="P:cellular response to hypoxia"/>
    <property type="evidence" value="ECO:0007669"/>
    <property type="project" value="Ensembl"/>
</dbReference>
<dbReference type="GO" id="GO:0071732">
    <property type="term" value="P:cellular response to nitric oxide"/>
    <property type="evidence" value="ECO:0007669"/>
    <property type="project" value="Ensembl"/>
</dbReference>
<dbReference type="GO" id="GO:0070059">
    <property type="term" value="P:intrinsic apoptotic signaling pathway in response to endoplasmic reticulum stress"/>
    <property type="evidence" value="ECO:0000250"/>
    <property type="project" value="UniProtKB"/>
</dbReference>
<dbReference type="GO" id="GO:0160203">
    <property type="term" value="P:mitochondrial disulfide relay system"/>
    <property type="evidence" value="ECO:0000315"/>
    <property type="project" value="UniProtKB"/>
</dbReference>
<dbReference type="GO" id="GO:0033108">
    <property type="term" value="P:mitochondrial respiratory chain complex assembly"/>
    <property type="evidence" value="ECO:0000315"/>
    <property type="project" value="UniProtKB"/>
</dbReference>
<dbReference type="GO" id="GO:0030182">
    <property type="term" value="P:neuron differentiation"/>
    <property type="evidence" value="ECO:0000314"/>
    <property type="project" value="UniProtKB"/>
</dbReference>
<dbReference type="GO" id="GO:0043065">
    <property type="term" value="P:positive regulation of apoptotic process"/>
    <property type="evidence" value="ECO:0000314"/>
    <property type="project" value="UniProtKB"/>
</dbReference>
<dbReference type="GO" id="GO:0060545">
    <property type="term" value="P:positive regulation of necroptotic process"/>
    <property type="evidence" value="ECO:0000250"/>
    <property type="project" value="UniProtKB"/>
</dbReference>
<dbReference type="GO" id="GO:0043525">
    <property type="term" value="P:positive regulation of neuron apoptotic process"/>
    <property type="evidence" value="ECO:0007669"/>
    <property type="project" value="Ensembl"/>
</dbReference>
<dbReference type="GO" id="GO:0045041">
    <property type="term" value="P:protein import into mitochondrial intermembrane space"/>
    <property type="evidence" value="ECO:0000315"/>
    <property type="project" value="UniProtKB"/>
</dbReference>
<dbReference type="GO" id="GO:0002931">
    <property type="term" value="P:response to ischemia"/>
    <property type="evidence" value="ECO:0007669"/>
    <property type="project" value="Ensembl"/>
</dbReference>
<dbReference type="GO" id="GO:1902065">
    <property type="term" value="P:response to L-glutamate"/>
    <property type="evidence" value="ECO:0007669"/>
    <property type="project" value="Ensembl"/>
</dbReference>
<dbReference type="GO" id="GO:0009636">
    <property type="term" value="P:response to toxic substance"/>
    <property type="evidence" value="ECO:0007669"/>
    <property type="project" value="Ensembl"/>
</dbReference>
<dbReference type="FunFam" id="3.30.390.30:FF:000007">
    <property type="entry name" value="Putative apoptosis-inducing factor 1, mitochondrial"/>
    <property type="match status" value="1"/>
</dbReference>
<dbReference type="Gene3D" id="3.30.390.30">
    <property type="match status" value="1"/>
</dbReference>
<dbReference type="Gene3D" id="3.50.50.60">
    <property type="entry name" value="FAD/NAD(P)-binding domain"/>
    <property type="match status" value="2"/>
</dbReference>
<dbReference type="InterPro" id="IPR029324">
    <property type="entry name" value="AIF_C"/>
</dbReference>
<dbReference type="InterPro" id="IPR050446">
    <property type="entry name" value="FAD-oxidoreductase/Apoptosis"/>
</dbReference>
<dbReference type="InterPro" id="IPR036188">
    <property type="entry name" value="FAD/NAD-bd_sf"/>
</dbReference>
<dbReference type="InterPro" id="IPR023753">
    <property type="entry name" value="FAD/NAD-binding_dom"/>
</dbReference>
<dbReference type="InterPro" id="IPR016156">
    <property type="entry name" value="FAD/NAD-linked_Rdtase_dimer_sf"/>
</dbReference>
<dbReference type="PANTHER" id="PTHR43557">
    <property type="entry name" value="APOPTOSIS-INDUCING FACTOR 1"/>
    <property type="match status" value="1"/>
</dbReference>
<dbReference type="PANTHER" id="PTHR43557:SF4">
    <property type="entry name" value="APOPTOSIS-INDUCING FACTOR 1, MITOCHONDRIAL"/>
    <property type="match status" value="1"/>
</dbReference>
<dbReference type="Pfam" id="PF14721">
    <property type="entry name" value="AIF_C"/>
    <property type="match status" value="1"/>
</dbReference>
<dbReference type="Pfam" id="PF07992">
    <property type="entry name" value="Pyr_redox_2"/>
    <property type="match status" value="1"/>
</dbReference>
<dbReference type="PRINTS" id="PR00368">
    <property type="entry name" value="FADPNR"/>
</dbReference>
<dbReference type="PRINTS" id="PR00411">
    <property type="entry name" value="PNDRDTASEI"/>
</dbReference>
<dbReference type="SMART" id="SM01353">
    <property type="entry name" value="AIF_C"/>
    <property type="match status" value="1"/>
</dbReference>
<dbReference type="SUPFAM" id="SSF51905">
    <property type="entry name" value="FAD/NAD(P)-binding domain"/>
    <property type="match status" value="2"/>
</dbReference>
<dbReference type="SUPFAM" id="SSF55424">
    <property type="entry name" value="FAD/NAD-linked reductases, dimerisation (C-terminal) domain"/>
    <property type="match status" value="1"/>
</dbReference>